<name>CD44_HUMAN</name>
<dbReference type="EMBL" id="M24915">
    <property type="protein sequence ID" value="AAA35674.1"/>
    <property type="molecule type" value="mRNA"/>
</dbReference>
<dbReference type="EMBL" id="M59040">
    <property type="protein sequence ID" value="AAA51950.1"/>
    <property type="molecule type" value="mRNA"/>
</dbReference>
<dbReference type="EMBL" id="X55150">
    <property type="protein sequence ID" value="CAA38951.1"/>
    <property type="molecule type" value="mRNA"/>
</dbReference>
<dbReference type="EMBL" id="X56794">
    <property type="protein sequence ID" value="CAA40133.1"/>
    <property type="molecule type" value="mRNA"/>
</dbReference>
<dbReference type="EMBL" id="X66733">
    <property type="protein sequence ID" value="CAA47271.1"/>
    <property type="molecule type" value="mRNA"/>
</dbReference>
<dbReference type="EMBL" id="L05423">
    <property type="protein sequence ID" value="AAB13622.1"/>
    <property type="molecule type" value="Genomic_DNA"/>
</dbReference>
<dbReference type="EMBL" id="L05407">
    <property type="protein sequence ID" value="AAB13622.1"/>
    <property type="status" value="JOINED"/>
    <property type="molecule type" value="Genomic_DNA"/>
</dbReference>
<dbReference type="EMBL" id="L05408">
    <property type="protein sequence ID" value="AAB13622.1"/>
    <property type="status" value="JOINED"/>
    <property type="molecule type" value="Genomic_DNA"/>
</dbReference>
<dbReference type="EMBL" id="L05409">
    <property type="protein sequence ID" value="AAB13622.1"/>
    <property type="status" value="JOINED"/>
    <property type="molecule type" value="Genomic_DNA"/>
</dbReference>
<dbReference type="EMBL" id="L05410">
    <property type="protein sequence ID" value="AAB13622.1"/>
    <property type="status" value="JOINED"/>
    <property type="molecule type" value="Genomic_DNA"/>
</dbReference>
<dbReference type="EMBL" id="L05420">
    <property type="protein sequence ID" value="AAB13622.1"/>
    <property type="status" value="JOINED"/>
    <property type="molecule type" value="Genomic_DNA"/>
</dbReference>
<dbReference type="EMBL" id="L05421">
    <property type="protein sequence ID" value="AAB13622.1"/>
    <property type="status" value="JOINED"/>
    <property type="molecule type" value="Genomic_DNA"/>
</dbReference>
<dbReference type="EMBL" id="L05422">
    <property type="protein sequence ID" value="AAB13622.1"/>
    <property type="status" value="JOINED"/>
    <property type="molecule type" value="Genomic_DNA"/>
</dbReference>
<dbReference type="EMBL" id="M69215">
    <property type="protein sequence ID" value="AAB13622.1"/>
    <property type="status" value="JOINED"/>
    <property type="molecule type" value="Genomic_DNA"/>
</dbReference>
<dbReference type="EMBL" id="L05423">
    <property type="protein sequence ID" value="AAB13623.1"/>
    <property type="molecule type" value="Genomic_DNA"/>
</dbReference>
<dbReference type="EMBL" id="L05407">
    <property type="protein sequence ID" value="AAB13623.1"/>
    <property type="status" value="JOINED"/>
    <property type="molecule type" value="Genomic_DNA"/>
</dbReference>
<dbReference type="EMBL" id="L05408">
    <property type="protein sequence ID" value="AAB13623.1"/>
    <property type="status" value="JOINED"/>
    <property type="molecule type" value="Genomic_DNA"/>
</dbReference>
<dbReference type="EMBL" id="L05410">
    <property type="protein sequence ID" value="AAB13623.1"/>
    <property type="status" value="JOINED"/>
    <property type="molecule type" value="Genomic_DNA"/>
</dbReference>
<dbReference type="EMBL" id="L05411">
    <property type="protein sequence ID" value="AAB13623.1"/>
    <property type="status" value="JOINED"/>
    <property type="molecule type" value="Genomic_DNA"/>
</dbReference>
<dbReference type="EMBL" id="L05412">
    <property type="protein sequence ID" value="AAB13623.1"/>
    <property type="status" value="JOINED"/>
    <property type="molecule type" value="Genomic_DNA"/>
</dbReference>
<dbReference type="EMBL" id="L05414">
    <property type="protein sequence ID" value="AAB13623.1"/>
    <property type="status" value="JOINED"/>
    <property type="molecule type" value="Genomic_DNA"/>
</dbReference>
<dbReference type="EMBL" id="L05415">
    <property type="protein sequence ID" value="AAB13623.1"/>
    <property type="status" value="JOINED"/>
    <property type="molecule type" value="Genomic_DNA"/>
</dbReference>
<dbReference type="EMBL" id="L05416">
    <property type="protein sequence ID" value="AAB13623.1"/>
    <property type="status" value="JOINED"/>
    <property type="molecule type" value="Genomic_DNA"/>
</dbReference>
<dbReference type="EMBL" id="L05417">
    <property type="protein sequence ID" value="AAB13623.1"/>
    <property type="status" value="JOINED"/>
    <property type="molecule type" value="Genomic_DNA"/>
</dbReference>
<dbReference type="EMBL" id="L05418">
    <property type="protein sequence ID" value="AAB13623.1"/>
    <property type="status" value="JOINED"/>
    <property type="molecule type" value="Genomic_DNA"/>
</dbReference>
<dbReference type="EMBL" id="L05419">
    <property type="protein sequence ID" value="AAB13623.1"/>
    <property type="status" value="JOINED"/>
    <property type="molecule type" value="Genomic_DNA"/>
</dbReference>
<dbReference type="EMBL" id="L05420">
    <property type="protein sequence ID" value="AAB13623.1"/>
    <property type="status" value="JOINED"/>
    <property type="molecule type" value="Genomic_DNA"/>
</dbReference>
<dbReference type="EMBL" id="L05421">
    <property type="protein sequence ID" value="AAB13623.1"/>
    <property type="status" value="JOINED"/>
    <property type="molecule type" value="Genomic_DNA"/>
</dbReference>
<dbReference type="EMBL" id="L05422">
    <property type="protein sequence ID" value="AAB13623.1"/>
    <property type="status" value="JOINED"/>
    <property type="molecule type" value="Genomic_DNA"/>
</dbReference>
<dbReference type="EMBL" id="M69215">
    <property type="protein sequence ID" value="AAB13623.1"/>
    <property type="status" value="JOINED"/>
    <property type="molecule type" value="Genomic_DNA"/>
</dbReference>
<dbReference type="EMBL" id="L05424">
    <property type="protein sequence ID" value="AAB13624.1"/>
    <property type="molecule type" value="Genomic_DNA"/>
</dbReference>
<dbReference type="EMBL" id="L05407">
    <property type="protein sequence ID" value="AAB13624.1"/>
    <property type="status" value="JOINED"/>
    <property type="molecule type" value="Genomic_DNA"/>
</dbReference>
<dbReference type="EMBL" id="L05408">
    <property type="protein sequence ID" value="AAB13624.1"/>
    <property type="status" value="JOINED"/>
    <property type="molecule type" value="Genomic_DNA"/>
</dbReference>
<dbReference type="EMBL" id="L05410">
    <property type="protein sequence ID" value="AAB13624.1"/>
    <property type="status" value="JOINED"/>
    <property type="molecule type" value="Genomic_DNA"/>
</dbReference>
<dbReference type="EMBL" id="L05420">
    <property type="protein sequence ID" value="AAB13624.1"/>
    <property type="status" value="JOINED"/>
    <property type="molecule type" value="Genomic_DNA"/>
</dbReference>
<dbReference type="EMBL" id="L05421">
    <property type="protein sequence ID" value="AAB13624.1"/>
    <property type="status" value="JOINED"/>
    <property type="molecule type" value="Genomic_DNA"/>
</dbReference>
<dbReference type="EMBL" id="L05422">
    <property type="protein sequence ID" value="AAB13624.1"/>
    <property type="status" value="JOINED"/>
    <property type="molecule type" value="Genomic_DNA"/>
</dbReference>
<dbReference type="EMBL" id="M69215">
    <property type="protein sequence ID" value="AAB13624.1"/>
    <property type="status" value="JOINED"/>
    <property type="molecule type" value="Genomic_DNA"/>
</dbReference>
<dbReference type="EMBL" id="L05424">
    <property type="protein sequence ID" value="AAB13625.1"/>
    <property type="molecule type" value="Genomic_DNA"/>
</dbReference>
<dbReference type="EMBL" id="L05407">
    <property type="protein sequence ID" value="AAB13625.1"/>
    <property type="status" value="JOINED"/>
    <property type="molecule type" value="Genomic_DNA"/>
</dbReference>
<dbReference type="EMBL" id="L05408">
    <property type="protein sequence ID" value="AAB13625.1"/>
    <property type="status" value="JOINED"/>
    <property type="molecule type" value="Genomic_DNA"/>
</dbReference>
<dbReference type="EMBL" id="L05410">
    <property type="protein sequence ID" value="AAB13625.1"/>
    <property type="status" value="JOINED"/>
    <property type="molecule type" value="Genomic_DNA"/>
</dbReference>
<dbReference type="EMBL" id="L05411">
    <property type="protein sequence ID" value="AAB13625.1"/>
    <property type="status" value="JOINED"/>
    <property type="molecule type" value="Genomic_DNA"/>
</dbReference>
<dbReference type="EMBL" id="L05412">
    <property type="protein sequence ID" value="AAB13625.1"/>
    <property type="status" value="JOINED"/>
    <property type="molecule type" value="Genomic_DNA"/>
</dbReference>
<dbReference type="EMBL" id="L05414">
    <property type="protein sequence ID" value="AAB13625.1"/>
    <property type="status" value="JOINED"/>
    <property type="molecule type" value="Genomic_DNA"/>
</dbReference>
<dbReference type="EMBL" id="L05416">
    <property type="protein sequence ID" value="AAB13625.1"/>
    <property type="status" value="JOINED"/>
    <property type="molecule type" value="Genomic_DNA"/>
</dbReference>
<dbReference type="EMBL" id="L05417">
    <property type="protein sequence ID" value="AAB13625.1"/>
    <property type="status" value="JOINED"/>
    <property type="molecule type" value="Genomic_DNA"/>
</dbReference>
<dbReference type="EMBL" id="L05418">
    <property type="protein sequence ID" value="AAB13625.1"/>
    <property type="status" value="JOINED"/>
    <property type="molecule type" value="Genomic_DNA"/>
</dbReference>
<dbReference type="EMBL" id="L05419">
    <property type="protein sequence ID" value="AAB13625.1"/>
    <property type="status" value="JOINED"/>
    <property type="molecule type" value="Genomic_DNA"/>
</dbReference>
<dbReference type="EMBL" id="L05420">
    <property type="protein sequence ID" value="AAB13625.1"/>
    <property type="status" value="JOINED"/>
    <property type="molecule type" value="Genomic_DNA"/>
</dbReference>
<dbReference type="EMBL" id="L05421">
    <property type="protein sequence ID" value="AAB13625.1"/>
    <property type="status" value="JOINED"/>
    <property type="molecule type" value="Genomic_DNA"/>
</dbReference>
<dbReference type="EMBL" id="L05422">
    <property type="protein sequence ID" value="AAB13625.1"/>
    <property type="status" value="JOINED"/>
    <property type="molecule type" value="Genomic_DNA"/>
</dbReference>
<dbReference type="EMBL" id="M69215">
    <property type="protein sequence ID" value="AAB13625.1"/>
    <property type="status" value="JOINED"/>
    <property type="molecule type" value="Genomic_DNA"/>
</dbReference>
<dbReference type="EMBL" id="L05424">
    <property type="protein sequence ID" value="AAB13626.1"/>
    <property type="molecule type" value="Genomic_DNA"/>
</dbReference>
<dbReference type="EMBL" id="L05407">
    <property type="protein sequence ID" value="AAB13626.1"/>
    <property type="status" value="JOINED"/>
    <property type="molecule type" value="Genomic_DNA"/>
</dbReference>
<dbReference type="EMBL" id="L05408">
    <property type="protein sequence ID" value="AAB13626.1"/>
    <property type="status" value="JOINED"/>
    <property type="molecule type" value="Genomic_DNA"/>
</dbReference>
<dbReference type="EMBL" id="L05410">
    <property type="protein sequence ID" value="AAB13626.1"/>
    <property type="status" value="JOINED"/>
    <property type="molecule type" value="Genomic_DNA"/>
</dbReference>
<dbReference type="EMBL" id="L05411">
    <property type="protein sequence ID" value="AAB13626.1"/>
    <property type="status" value="JOINED"/>
    <property type="molecule type" value="Genomic_DNA"/>
</dbReference>
<dbReference type="EMBL" id="L05412">
    <property type="protein sequence ID" value="AAB13626.1"/>
    <property type="status" value="JOINED"/>
    <property type="molecule type" value="Genomic_DNA"/>
</dbReference>
<dbReference type="EMBL" id="L05414">
    <property type="protein sequence ID" value="AAB13626.1"/>
    <property type="status" value="JOINED"/>
    <property type="molecule type" value="Genomic_DNA"/>
</dbReference>
<dbReference type="EMBL" id="L05416">
    <property type="protein sequence ID" value="AAB13626.1"/>
    <property type="status" value="JOINED"/>
    <property type="molecule type" value="Genomic_DNA"/>
</dbReference>
<dbReference type="EMBL" id="L05417">
    <property type="protein sequence ID" value="AAB13626.1"/>
    <property type="status" value="JOINED"/>
    <property type="molecule type" value="Genomic_DNA"/>
</dbReference>
<dbReference type="EMBL" id="L05418">
    <property type="protein sequence ID" value="AAB13626.1"/>
    <property type="status" value="JOINED"/>
    <property type="molecule type" value="Genomic_DNA"/>
</dbReference>
<dbReference type="EMBL" id="L05419">
    <property type="protein sequence ID" value="AAB13626.1"/>
    <property type="status" value="JOINED"/>
    <property type="molecule type" value="Genomic_DNA"/>
</dbReference>
<dbReference type="EMBL" id="L05420">
    <property type="protein sequence ID" value="AAB13626.1"/>
    <property type="status" value="JOINED"/>
    <property type="molecule type" value="Genomic_DNA"/>
</dbReference>
<dbReference type="EMBL" id="L05421">
    <property type="protein sequence ID" value="AAB13626.1"/>
    <property type="status" value="JOINED"/>
    <property type="molecule type" value="Genomic_DNA"/>
</dbReference>
<dbReference type="EMBL" id="L05422">
    <property type="protein sequence ID" value="AAB13626.1"/>
    <property type="status" value="JOINED"/>
    <property type="molecule type" value="Genomic_DNA"/>
</dbReference>
<dbReference type="EMBL" id="M69215">
    <property type="protein sequence ID" value="AAB13626.1"/>
    <property type="status" value="JOINED"/>
    <property type="molecule type" value="Genomic_DNA"/>
</dbReference>
<dbReference type="EMBL" id="L05424">
    <property type="protein sequence ID" value="AAB13627.1"/>
    <property type="molecule type" value="Genomic_DNA"/>
</dbReference>
<dbReference type="EMBL" id="L05407">
    <property type="protein sequence ID" value="AAB13627.1"/>
    <property type="status" value="JOINED"/>
    <property type="molecule type" value="Genomic_DNA"/>
</dbReference>
<dbReference type="EMBL" id="L05408">
    <property type="protein sequence ID" value="AAB13627.1"/>
    <property type="status" value="JOINED"/>
    <property type="molecule type" value="Genomic_DNA"/>
</dbReference>
<dbReference type="EMBL" id="L05410">
    <property type="protein sequence ID" value="AAB13627.1"/>
    <property type="status" value="JOINED"/>
    <property type="molecule type" value="Genomic_DNA"/>
</dbReference>
<dbReference type="EMBL" id="L05417">
    <property type="protein sequence ID" value="AAB13627.1"/>
    <property type="status" value="JOINED"/>
    <property type="molecule type" value="Genomic_DNA"/>
</dbReference>
<dbReference type="EMBL" id="L05418">
    <property type="protein sequence ID" value="AAB13627.1"/>
    <property type="status" value="JOINED"/>
    <property type="molecule type" value="Genomic_DNA"/>
</dbReference>
<dbReference type="EMBL" id="L05420">
    <property type="protein sequence ID" value="AAB13627.1"/>
    <property type="status" value="JOINED"/>
    <property type="molecule type" value="Genomic_DNA"/>
</dbReference>
<dbReference type="EMBL" id="L05421">
    <property type="protein sequence ID" value="AAB13627.1"/>
    <property type="status" value="JOINED"/>
    <property type="molecule type" value="Genomic_DNA"/>
</dbReference>
<dbReference type="EMBL" id="L05422">
    <property type="protein sequence ID" value="AAB13627.1"/>
    <property type="status" value="JOINED"/>
    <property type="molecule type" value="Genomic_DNA"/>
</dbReference>
<dbReference type="EMBL" id="M69215">
    <property type="protein sequence ID" value="AAB13627.1"/>
    <property type="status" value="JOINED"/>
    <property type="molecule type" value="Genomic_DNA"/>
</dbReference>
<dbReference type="EMBL" id="L05424">
    <property type="protein sequence ID" value="AAB13628.1"/>
    <property type="molecule type" value="Genomic_DNA"/>
</dbReference>
<dbReference type="EMBL" id="L05407">
    <property type="protein sequence ID" value="AAB13628.1"/>
    <property type="status" value="JOINED"/>
    <property type="molecule type" value="Genomic_DNA"/>
</dbReference>
<dbReference type="EMBL" id="L05408">
    <property type="protein sequence ID" value="AAB13628.1"/>
    <property type="status" value="JOINED"/>
    <property type="molecule type" value="Genomic_DNA"/>
</dbReference>
<dbReference type="EMBL" id="L05410">
    <property type="protein sequence ID" value="AAB13628.1"/>
    <property type="status" value="JOINED"/>
    <property type="molecule type" value="Genomic_DNA"/>
</dbReference>
<dbReference type="EMBL" id="L05411">
    <property type="protein sequence ID" value="AAB13628.1"/>
    <property type="status" value="JOINED"/>
    <property type="molecule type" value="Genomic_DNA"/>
</dbReference>
<dbReference type="EMBL" id="L05412">
    <property type="protein sequence ID" value="AAB13628.1"/>
    <property type="status" value="JOINED"/>
    <property type="molecule type" value="Genomic_DNA"/>
</dbReference>
<dbReference type="EMBL" id="L05414">
    <property type="protein sequence ID" value="AAB13628.1"/>
    <property type="status" value="JOINED"/>
    <property type="molecule type" value="Genomic_DNA"/>
</dbReference>
<dbReference type="EMBL" id="L05415">
    <property type="protein sequence ID" value="AAB13628.1"/>
    <property type="status" value="JOINED"/>
    <property type="molecule type" value="Genomic_DNA"/>
</dbReference>
<dbReference type="EMBL" id="L05416">
    <property type="protein sequence ID" value="AAB13628.1"/>
    <property type="status" value="JOINED"/>
    <property type="molecule type" value="Genomic_DNA"/>
</dbReference>
<dbReference type="EMBL" id="L05417">
    <property type="protein sequence ID" value="AAB13628.1"/>
    <property type="status" value="JOINED"/>
    <property type="molecule type" value="Genomic_DNA"/>
</dbReference>
<dbReference type="EMBL" id="L05418">
    <property type="protein sequence ID" value="AAB13628.1"/>
    <property type="status" value="JOINED"/>
    <property type="molecule type" value="Genomic_DNA"/>
</dbReference>
<dbReference type="EMBL" id="L05419">
    <property type="protein sequence ID" value="AAB13628.1"/>
    <property type="status" value="JOINED"/>
    <property type="molecule type" value="Genomic_DNA"/>
</dbReference>
<dbReference type="EMBL" id="L05420">
    <property type="protein sequence ID" value="AAB13628.1"/>
    <property type="status" value="JOINED"/>
    <property type="molecule type" value="Genomic_DNA"/>
</dbReference>
<dbReference type="EMBL" id="L05421">
    <property type="protein sequence ID" value="AAB13628.1"/>
    <property type="status" value="JOINED"/>
    <property type="molecule type" value="Genomic_DNA"/>
</dbReference>
<dbReference type="EMBL" id="L05422">
    <property type="protein sequence ID" value="AAB13628.1"/>
    <property type="status" value="JOINED"/>
    <property type="molecule type" value="Genomic_DNA"/>
</dbReference>
<dbReference type="EMBL" id="M69215">
    <property type="protein sequence ID" value="AAB13628.1"/>
    <property type="status" value="JOINED"/>
    <property type="molecule type" value="Genomic_DNA"/>
</dbReference>
<dbReference type="EMBL" id="AJ251595">
    <property type="protein sequence ID" value="CAB61878.1"/>
    <property type="molecule type" value="mRNA"/>
</dbReference>
<dbReference type="EMBL" id="S66400">
    <property type="protein sequence ID" value="AAB27917.1"/>
    <property type="molecule type" value="mRNA"/>
</dbReference>
<dbReference type="EMBL" id="S66400">
    <property type="protein sequence ID" value="AAB27918.2"/>
    <property type="molecule type" value="mRNA"/>
</dbReference>
<dbReference type="EMBL" id="S66400">
    <property type="protein sequence ID" value="AAB27919.1"/>
    <property type="molecule type" value="mRNA"/>
</dbReference>
<dbReference type="EMBL" id="AF098641">
    <property type="protein sequence ID" value="AAC70782.1"/>
    <property type="molecule type" value="mRNA"/>
</dbReference>
<dbReference type="EMBL" id="U40373">
    <property type="protein sequence ID" value="AAA82949.1"/>
    <property type="molecule type" value="mRNA"/>
</dbReference>
<dbReference type="EMBL" id="AY101192">
    <property type="protein sequence ID" value="AAM50040.1"/>
    <property type="molecule type" value="mRNA"/>
</dbReference>
<dbReference type="EMBL" id="AY101193">
    <property type="protein sequence ID" value="AAM50041.1"/>
    <property type="molecule type" value="mRNA"/>
</dbReference>
<dbReference type="EMBL" id="EF581837">
    <property type="protein sequence ID" value="ABQ59315.1"/>
    <property type="molecule type" value="mRNA"/>
</dbReference>
<dbReference type="EMBL" id="FJ216964">
    <property type="protein sequence ID" value="ACI46596.1"/>
    <property type="molecule type" value="mRNA"/>
</dbReference>
<dbReference type="EMBL" id="AL832642">
    <property type="protein sequence ID" value="CAD89965.1"/>
    <property type="molecule type" value="mRNA"/>
</dbReference>
<dbReference type="EMBL" id="AL133330">
    <property type="status" value="NOT_ANNOTATED_CDS"/>
    <property type="molecule type" value="Genomic_DNA"/>
</dbReference>
<dbReference type="EMBL" id="AL136989">
    <property type="status" value="NOT_ANNOTATED_CDS"/>
    <property type="molecule type" value="Genomic_DNA"/>
</dbReference>
<dbReference type="EMBL" id="AL356215">
    <property type="status" value="NOT_ANNOTATED_CDS"/>
    <property type="molecule type" value="Genomic_DNA"/>
</dbReference>
<dbReference type="EMBL" id="CH471064">
    <property type="protein sequence ID" value="EAW68147.1"/>
    <property type="molecule type" value="Genomic_DNA"/>
</dbReference>
<dbReference type="EMBL" id="CH471064">
    <property type="protein sequence ID" value="EAW68148.1"/>
    <property type="molecule type" value="Genomic_DNA"/>
</dbReference>
<dbReference type="EMBL" id="CH471064">
    <property type="protein sequence ID" value="EAW68149.1"/>
    <property type="molecule type" value="Genomic_DNA"/>
</dbReference>
<dbReference type="EMBL" id="CH471064">
    <property type="protein sequence ID" value="EAW68151.1"/>
    <property type="molecule type" value="Genomic_DNA"/>
</dbReference>
<dbReference type="EMBL" id="CH471064">
    <property type="protein sequence ID" value="EAW68152.1"/>
    <property type="molecule type" value="Genomic_DNA"/>
</dbReference>
<dbReference type="EMBL" id="BC004372">
    <property type="protein sequence ID" value="AAH04372.1"/>
    <property type="molecule type" value="mRNA"/>
</dbReference>
<dbReference type="EMBL" id="BC067348">
    <property type="protein sequence ID" value="AAH67348.1"/>
    <property type="molecule type" value="mRNA"/>
</dbReference>
<dbReference type="EMBL" id="M25078">
    <property type="protein sequence ID" value="AAA36138.1"/>
    <property type="molecule type" value="mRNA"/>
</dbReference>
<dbReference type="EMBL" id="X55938">
    <property type="protein sequence ID" value="CAA39404.1"/>
    <property type="molecule type" value="mRNA"/>
</dbReference>
<dbReference type="EMBL" id="S72928">
    <property type="protein sequence ID" value="AAB30429.1"/>
    <property type="molecule type" value="Genomic_DNA"/>
</dbReference>
<dbReference type="EMBL" id="X62739">
    <property type="protein sequence ID" value="CAA44602.1"/>
    <property type="molecule type" value="mRNA"/>
</dbReference>
<dbReference type="CCDS" id="CCDS31455.1">
    <molecule id="P16070-4"/>
</dbReference>
<dbReference type="CCDS" id="CCDS31456.1">
    <molecule id="P16070-10"/>
</dbReference>
<dbReference type="CCDS" id="CCDS31457.1">
    <molecule id="P16070-12"/>
</dbReference>
<dbReference type="CCDS" id="CCDS31458.1">
    <molecule id="P16070-19"/>
</dbReference>
<dbReference type="CCDS" id="CCDS55754.1">
    <molecule id="P16070-11"/>
</dbReference>
<dbReference type="CCDS" id="CCDS55755.1">
    <molecule id="P16070-18"/>
</dbReference>
<dbReference type="CCDS" id="CCDS7897.1">
    <molecule id="P16070-1"/>
</dbReference>
<dbReference type="PIR" id="A47195">
    <property type="entry name" value="A47195"/>
</dbReference>
<dbReference type="PIR" id="I37369">
    <property type="entry name" value="I37369"/>
</dbReference>
<dbReference type="PIR" id="I77371">
    <property type="entry name" value="I77371"/>
</dbReference>
<dbReference type="PIR" id="I77372">
    <property type="entry name" value="I77372"/>
</dbReference>
<dbReference type="PIR" id="JH0417">
    <property type="entry name" value="JH0417"/>
</dbReference>
<dbReference type="PIR" id="JH0518">
    <property type="entry name" value="JH0518"/>
</dbReference>
<dbReference type="PIR" id="S13530">
    <property type="entry name" value="S13530"/>
</dbReference>
<dbReference type="PIR" id="S24222">
    <property type="entry name" value="S24222"/>
</dbReference>
<dbReference type="RefSeq" id="NP_000601.3">
    <molecule id="P16070-1"/>
    <property type="nucleotide sequence ID" value="NM_000610.3"/>
</dbReference>
<dbReference type="RefSeq" id="NP_001001389.1">
    <molecule id="P16070-4"/>
    <property type="nucleotide sequence ID" value="NM_001001389.2"/>
</dbReference>
<dbReference type="RefSeq" id="NP_001001390.1">
    <molecule id="P16070-10"/>
    <property type="nucleotide sequence ID" value="NM_001001390.2"/>
</dbReference>
<dbReference type="RefSeq" id="NP_001001391.1">
    <molecule id="P16070-12"/>
    <property type="nucleotide sequence ID" value="NM_001001391.2"/>
</dbReference>
<dbReference type="RefSeq" id="NP_001001392.1">
    <molecule id="P16070-19"/>
    <property type="nucleotide sequence ID" value="NM_001001392.2"/>
</dbReference>
<dbReference type="RefSeq" id="NP_001189484.1">
    <molecule id="P16070-11"/>
    <property type="nucleotide sequence ID" value="NM_001202555.2"/>
</dbReference>
<dbReference type="RefSeq" id="NP_001189485.1">
    <molecule id="P16070-18"/>
    <property type="nucleotide sequence ID" value="NM_001202556.2"/>
</dbReference>
<dbReference type="RefSeq" id="NP_001189486.1">
    <molecule id="P16070-15"/>
    <property type="nucleotide sequence ID" value="NM_001202557.2"/>
</dbReference>
<dbReference type="RefSeq" id="XP_011518790.1">
    <molecule id="P16070-13"/>
    <property type="nucleotide sequence ID" value="XM_011520488.3"/>
</dbReference>
<dbReference type="PDB" id="1POZ">
    <property type="method" value="NMR"/>
    <property type="chains" value="A=20-178"/>
</dbReference>
<dbReference type="PDB" id="1UUH">
    <property type="method" value="X-ray"/>
    <property type="resolution" value="2.20 A"/>
    <property type="chains" value="A/B=20-178"/>
</dbReference>
<dbReference type="PDB" id="2I83">
    <property type="method" value="NMR"/>
    <property type="chains" value="A=21-178"/>
</dbReference>
<dbReference type="PDB" id="4PZ3">
    <property type="method" value="X-ray"/>
    <property type="resolution" value="1.08 A"/>
    <property type="chains" value="A/B=18-170"/>
</dbReference>
<dbReference type="PDB" id="4PZ4">
    <property type="method" value="X-ray"/>
    <property type="resolution" value="1.60 A"/>
    <property type="chains" value="A/B=18-171"/>
</dbReference>
<dbReference type="PDB" id="6TXS">
    <property type="method" value="X-ray"/>
    <property type="resolution" value="2.20 A"/>
    <property type="chains" value="BBB=678-685"/>
</dbReference>
<dbReference type="PDBsum" id="1POZ"/>
<dbReference type="PDBsum" id="1UUH"/>
<dbReference type="PDBsum" id="2I83"/>
<dbReference type="PDBsum" id="4PZ3"/>
<dbReference type="PDBsum" id="4PZ4"/>
<dbReference type="PDBsum" id="6TXS"/>
<dbReference type="SMR" id="P16070"/>
<dbReference type="BioGRID" id="107398">
    <property type="interactions" value="241"/>
</dbReference>
<dbReference type="CORUM" id="P16070"/>
<dbReference type="DIP" id="DIP-1121N"/>
<dbReference type="ELM" id="P16070"/>
<dbReference type="FunCoup" id="P16070">
    <property type="interactions" value="1092"/>
</dbReference>
<dbReference type="IntAct" id="P16070">
    <property type="interactions" value="135"/>
</dbReference>
<dbReference type="MINT" id="P16070"/>
<dbReference type="STRING" id="9606.ENSP00000398632"/>
<dbReference type="BindingDB" id="P16070"/>
<dbReference type="ChEMBL" id="CHEMBL3232692"/>
<dbReference type="DrugBank" id="DB06550">
    <property type="generic name" value="Bivatuzumab"/>
</dbReference>
<dbReference type="DrugBank" id="DB08818">
    <property type="generic name" value="Hyaluronic acid"/>
</dbReference>
<dbReference type="TCDB" id="9.B.87.1.31">
    <property type="family name" value="the selenoprotein p receptor (selp-receptor) family"/>
</dbReference>
<dbReference type="GlyConnect" id="736">
    <property type="glycosylation" value="42 N-Linked glycans (2 sites)"/>
</dbReference>
<dbReference type="GlyCosmos" id="P16070">
    <property type="glycosylation" value="19 sites, 43 glycans"/>
</dbReference>
<dbReference type="GlyGen" id="P16070">
    <property type="glycosylation" value="66 sites, 74 N-linked glycans (4 sites), 4 O-linked glycans (46 sites)"/>
</dbReference>
<dbReference type="iPTMnet" id="P16070"/>
<dbReference type="MetOSite" id="P16070"/>
<dbReference type="PhosphoSitePlus" id="P16070"/>
<dbReference type="SwissPalm" id="P16070"/>
<dbReference type="BioMuta" id="CD44"/>
<dbReference type="DMDM" id="308153615"/>
<dbReference type="CPTAC" id="CPTAC-668"/>
<dbReference type="CPTAC" id="CPTAC-692"/>
<dbReference type="jPOST" id="P16070"/>
<dbReference type="MassIVE" id="P16070"/>
<dbReference type="PaxDb" id="9606-ENSP00000398632"/>
<dbReference type="PeptideAtlas" id="P16070"/>
<dbReference type="ProteomicsDB" id="53266">
    <molecule id="P16070-1"/>
</dbReference>
<dbReference type="ProteomicsDB" id="53267">
    <molecule id="P16070-10"/>
</dbReference>
<dbReference type="ProteomicsDB" id="53268">
    <molecule id="P16070-11"/>
</dbReference>
<dbReference type="ProteomicsDB" id="53269">
    <molecule id="P16070-12"/>
</dbReference>
<dbReference type="ProteomicsDB" id="53270">
    <molecule id="P16070-13"/>
</dbReference>
<dbReference type="ProteomicsDB" id="53271">
    <molecule id="P16070-14"/>
</dbReference>
<dbReference type="ProteomicsDB" id="53272">
    <molecule id="P16070-15"/>
</dbReference>
<dbReference type="ProteomicsDB" id="53273">
    <molecule id="P16070-16"/>
</dbReference>
<dbReference type="ProteomicsDB" id="53274">
    <molecule id="P16070-17"/>
</dbReference>
<dbReference type="ProteomicsDB" id="53275">
    <molecule id="P16070-18"/>
</dbReference>
<dbReference type="ProteomicsDB" id="53276">
    <molecule id="P16070-19"/>
</dbReference>
<dbReference type="ProteomicsDB" id="53278">
    <molecule id="P16070-3"/>
</dbReference>
<dbReference type="ProteomicsDB" id="53279">
    <molecule id="P16070-4"/>
</dbReference>
<dbReference type="ProteomicsDB" id="53280">
    <molecule id="P16070-5"/>
</dbReference>
<dbReference type="ProteomicsDB" id="53281">
    <molecule id="P16070-6"/>
</dbReference>
<dbReference type="ProteomicsDB" id="53282">
    <molecule id="P16070-7"/>
</dbReference>
<dbReference type="ProteomicsDB" id="53283">
    <molecule id="P16070-8"/>
</dbReference>
<dbReference type="ProteomicsDB" id="53284">
    <molecule id="P16070-9"/>
</dbReference>
<dbReference type="Pumba" id="P16070"/>
<dbReference type="TopDownProteomics" id="P16070-12">
    <molecule id="P16070-12"/>
</dbReference>
<dbReference type="TopDownProteomics" id="P16070-14">
    <molecule id="P16070-14"/>
</dbReference>
<dbReference type="TopDownProteomics" id="P16070-18">
    <molecule id="P16070-18"/>
</dbReference>
<dbReference type="TopDownProteomics" id="P16070-4">
    <molecule id="P16070-4"/>
</dbReference>
<dbReference type="TopDownProteomics" id="P16070-7">
    <molecule id="P16070-7"/>
</dbReference>
<dbReference type="ABCD" id="P16070">
    <property type="antibodies" value="23 sequenced antibodies"/>
</dbReference>
<dbReference type="Antibodypedia" id="804">
    <property type="antibodies" value="5709 antibodies from 58 providers"/>
</dbReference>
<dbReference type="CPTC" id="P16070">
    <property type="antibodies" value="2 antibodies"/>
</dbReference>
<dbReference type="DNASU" id="960"/>
<dbReference type="Ensembl" id="ENST00000263398.11">
    <molecule id="P16070-12"/>
    <property type="protein sequence ID" value="ENSP00000263398.6"/>
    <property type="gene ID" value="ENSG00000026508.21"/>
</dbReference>
<dbReference type="Ensembl" id="ENST00000278386.10">
    <molecule id="P16070-19"/>
    <property type="protein sequence ID" value="ENSP00000278386.6"/>
    <property type="gene ID" value="ENSG00000026508.21"/>
</dbReference>
<dbReference type="Ensembl" id="ENST00000352818.8">
    <molecule id="P16070-18"/>
    <property type="protein sequence ID" value="ENSP00000309732.6"/>
    <property type="gene ID" value="ENSG00000026508.21"/>
</dbReference>
<dbReference type="Ensembl" id="ENST00000415148.6">
    <molecule id="P16070-4"/>
    <property type="protein sequence ID" value="ENSP00000389830.2"/>
    <property type="gene ID" value="ENSG00000026508.21"/>
</dbReference>
<dbReference type="Ensembl" id="ENST00000428726.8">
    <molecule id="P16070-1"/>
    <property type="protein sequence ID" value="ENSP00000398632.2"/>
    <property type="gene ID" value="ENSG00000026508.21"/>
</dbReference>
<dbReference type="Ensembl" id="ENST00000433892.6">
    <molecule id="P16070-10"/>
    <property type="protein sequence ID" value="ENSP00000392331.2"/>
    <property type="gene ID" value="ENSG00000026508.21"/>
</dbReference>
<dbReference type="Ensembl" id="ENST00000434472.6">
    <molecule id="P16070-11"/>
    <property type="protein sequence ID" value="ENSP00000404447.2"/>
    <property type="gene ID" value="ENSG00000026508.21"/>
</dbReference>
<dbReference type="GeneID" id="960"/>
<dbReference type="KEGG" id="hsa:960"/>
<dbReference type="MANE-Select" id="ENST00000428726.8">
    <property type="protein sequence ID" value="ENSP00000398632.2"/>
    <property type="RefSeq nucleotide sequence ID" value="NM_000610.4"/>
    <property type="RefSeq protein sequence ID" value="NP_000601.3"/>
</dbReference>
<dbReference type="UCSC" id="uc001mvu.4">
    <molecule id="P16070-1"/>
    <property type="organism name" value="human"/>
</dbReference>
<dbReference type="AGR" id="HGNC:1681"/>
<dbReference type="CTD" id="960"/>
<dbReference type="DisGeNET" id="960"/>
<dbReference type="GeneCards" id="CD44"/>
<dbReference type="HGNC" id="HGNC:1681">
    <property type="gene designation" value="CD44"/>
</dbReference>
<dbReference type="HPA" id="ENSG00000026508">
    <property type="expression patterns" value="Tissue enhanced (salivary)"/>
</dbReference>
<dbReference type="MalaCards" id="CD44"/>
<dbReference type="MIM" id="107269">
    <property type="type" value="gene"/>
</dbReference>
<dbReference type="MIM" id="172290">
    <property type="type" value="gene"/>
</dbReference>
<dbReference type="MIM" id="609027">
    <property type="type" value="phenotype"/>
</dbReference>
<dbReference type="neXtProt" id="NX_P16070"/>
<dbReference type="OpenTargets" id="ENSG00000026508"/>
<dbReference type="PharmGKB" id="PA26221"/>
<dbReference type="VEuPathDB" id="HostDB:ENSG00000026508"/>
<dbReference type="eggNOG" id="ENOG502RX7Q">
    <property type="taxonomic scope" value="Eukaryota"/>
</dbReference>
<dbReference type="GeneTree" id="ENSGT00530000063822"/>
<dbReference type="HOGENOM" id="CLU_391256_0_0_1"/>
<dbReference type="InParanoid" id="P16070"/>
<dbReference type="OMA" id="KAQIPEW"/>
<dbReference type="OrthoDB" id="9938473at2759"/>
<dbReference type="PAN-GO" id="P16070">
    <property type="GO annotations" value="9 GO annotations based on evolutionary models"/>
</dbReference>
<dbReference type="PhylomeDB" id="P16070"/>
<dbReference type="TreeFam" id="TF334173"/>
<dbReference type="PathwayCommons" id="P16070"/>
<dbReference type="Reactome" id="R-HSA-1474228">
    <property type="pathway name" value="Degradation of the extracellular matrix"/>
</dbReference>
<dbReference type="Reactome" id="R-HSA-202733">
    <property type="pathway name" value="Cell surface interactions at the vascular wall"/>
</dbReference>
<dbReference type="Reactome" id="R-HSA-216083">
    <property type="pathway name" value="Integrin cell surface interactions"/>
</dbReference>
<dbReference type="Reactome" id="R-HSA-2160916">
    <property type="pathway name" value="Hyaluronan uptake and degradation"/>
</dbReference>
<dbReference type="Reactome" id="R-HSA-6798695">
    <property type="pathway name" value="Neutrophil degranulation"/>
</dbReference>
<dbReference type="Reactome" id="R-HSA-877300">
    <property type="pathway name" value="Interferon gamma signaling"/>
</dbReference>
<dbReference type="SignaLink" id="P16070"/>
<dbReference type="SIGNOR" id="P16070"/>
<dbReference type="BioGRID-ORCS" id="960">
    <property type="hits" value="34 hits in 1179 CRISPR screens"/>
</dbReference>
<dbReference type="ChiTaRS" id="CD44">
    <property type="organism name" value="human"/>
</dbReference>
<dbReference type="EvolutionaryTrace" id="P16070"/>
<dbReference type="GeneWiki" id="CD44"/>
<dbReference type="GenomeRNAi" id="960"/>
<dbReference type="Pharos" id="P16070">
    <property type="development level" value="Tbio"/>
</dbReference>
<dbReference type="PRO" id="PR:P16070"/>
<dbReference type="Proteomes" id="UP000005640">
    <property type="component" value="Chromosome 11"/>
</dbReference>
<dbReference type="RNAct" id="P16070">
    <property type="molecule type" value="protein"/>
</dbReference>
<dbReference type="Bgee" id="ENSG00000026508">
    <property type="expression patterns" value="Expressed in parotid gland and 201 other cell types or tissues"/>
</dbReference>
<dbReference type="ExpressionAtlas" id="P16070">
    <property type="expression patterns" value="baseline and differential"/>
</dbReference>
<dbReference type="GO" id="GO:0016324">
    <property type="term" value="C:apical plasma membrane"/>
    <property type="evidence" value="ECO:0000314"/>
    <property type="project" value="UniProtKB"/>
</dbReference>
<dbReference type="GO" id="GO:0016323">
    <property type="term" value="C:basolateral plasma membrane"/>
    <property type="evidence" value="ECO:0000318"/>
    <property type="project" value="GO_Central"/>
</dbReference>
<dbReference type="GO" id="GO:0042995">
    <property type="term" value="C:cell projection"/>
    <property type="evidence" value="ECO:0000314"/>
    <property type="project" value="UniProtKB"/>
</dbReference>
<dbReference type="GO" id="GO:0009986">
    <property type="term" value="C:cell surface"/>
    <property type="evidence" value="ECO:0000314"/>
    <property type="project" value="UniProtKB"/>
</dbReference>
<dbReference type="GO" id="GO:0005829">
    <property type="term" value="C:cytosol"/>
    <property type="evidence" value="ECO:0000314"/>
    <property type="project" value="HPA"/>
</dbReference>
<dbReference type="GO" id="GO:0070062">
    <property type="term" value="C:extracellular exosome"/>
    <property type="evidence" value="ECO:0007005"/>
    <property type="project" value="UniProtKB"/>
</dbReference>
<dbReference type="GO" id="GO:0005925">
    <property type="term" value="C:focal adhesion"/>
    <property type="evidence" value="ECO:0007005"/>
    <property type="project" value="UniProtKB"/>
</dbReference>
<dbReference type="GO" id="GO:0005794">
    <property type="term" value="C:Golgi apparatus"/>
    <property type="evidence" value="ECO:0000314"/>
    <property type="project" value="HPA"/>
</dbReference>
<dbReference type="GO" id="GO:0031258">
    <property type="term" value="C:lamellipodium membrane"/>
    <property type="evidence" value="ECO:0000314"/>
    <property type="project" value="UniProtKB"/>
</dbReference>
<dbReference type="GO" id="GO:0035692">
    <property type="term" value="C:macrophage migration inhibitory factor receptor complex"/>
    <property type="evidence" value="ECO:0000314"/>
    <property type="project" value="BHF-UCL"/>
</dbReference>
<dbReference type="GO" id="GO:0005902">
    <property type="term" value="C:microvillus"/>
    <property type="evidence" value="ECO:0000250"/>
    <property type="project" value="UniProtKB"/>
</dbReference>
<dbReference type="GO" id="GO:0005886">
    <property type="term" value="C:plasma membrane"/>
    <property type="evidence" value="ECO:0000314"/>
    <property type="project" value="HPA"/>
</dbReference>
<dbReference type="GO" id="GO:0030667">
    <property type="term" value="C:secretory granule membrane"/>
    <property type="evidence" value="ECO:0000304"/>
    <property type="project" value="Reactome"/>
</dbReference>
<dbReference type="GO" id="GO:0005518">
    <property type="term" value="F:collagen binding"/>
    <property type="evidence" value="ECO:0000303"/>
    <property type="project" value="UniProtKB"/>
</dbReference>
<dbReference type="GO" id="GO:0005540">
    <property type="term" value="F:hyaluronic acid binding"/>
    <property type="evidence" value="ECO:0000314"/>
    <property type="project" value="UniProtKB"/>
</dbReference>
<dbReference type="GO" id="GO:0004888">
    <property type="term" value="F:transmembrane signaling receptor activity"/>
    <property type="evidence" value="ECO:0000318"/>
    <property type="project" value="GO_Central"/>
</dbReference>
<dbReference type="GO" id="GO:0051216">
    <property type="term" value="P:cartilage development"/>
    <property type="evidence" value="ECO:0000270"/>
    <property type="project" value="UniProtKB"/>
</dbReference>
<dbReference type="GO" id="GO:0007155">
    <property type="term" value="P:cell adhesion"/>
    <property type="evidence" value="ECO:0000314"/>
    <property type="project" value="UniProtKB"/>
</dbReference>
<dbReference type="GO" id="GO:0016477">
    <property type="term" value="P:cell migration"/>
    <property type="evidence" value="ECO:0000314"/>
    <property type="project" value="UniProtKB"/>
</dbReference>
<dbReference type="GO" id="GO:0098609">
    <property type="term" value="P:cell-cell adhesion"/>
    <property type="evidence" value="ECO:0000303"/>
    <property type="project" value="UniProtKB"/>
</dbReference>
<dbReference type="GO" id="GO:0007160">
    <property type="term" value="P:cell-matrix adhesion"/>
    <property type="evidence" value="ECO:0000303"/>
    <property type="project" value="UniProtKB"/>
</dbReference>
<dbReference type="GO" id="GO:0044344">
    <property type="term" value="P:cellular response to fibroblast growth factor stimulus"/>
    <property type="evidence" value="ECO:0000314"/>
    <property type="project" value="UniProtKB"/>
</dbReference>
<dbReference type="GO" id="GO:0019221">
    <property type="term" value="P:cytokine-mediated signaling pathway"/>
    <property type="evidence" value="ECO:0007669"/>
    <property type="project" value="GOC"/>
</dbReference>
<dbReference type="GO" id="GO:0030214">
    <property type="term" value="P:hyaluronan catabolic process"/>
    <property type="evidence" value="ECO:0000314"/>
    <property type="project" value="UniProtKB"/>
</dbReference>
<dbReference type="GO" id="GO:0006954">
    <property type="term" value="P:inflammatory response"/>
    <property type="evidence" value="ECO:0000318"/>
    <property type="project" value="GO_Central"/>
</dbReference>
<dbReference type="GO" id="GO:0070487">
    <property type="term" value="P:monocyte aggregation"/>
    <property type="evidence" value="ECO:0000315"/>
    <property type="project" value="UniProtKB"/>
</dbReference>
<dbReference type="GO" id="GO:0043066">
    <property type="term" value="P:negative regulation of apoptotic process"/>
    <property type="evidence" value="ECO:0000315"/>
    <property type="project" value="UniProtKB"/>
</dbReference>
<dbReference type="GO" id="GO:0043518">
    <property type="term" value="P:negative regulation of DNA damage response, signal transduction by p53 class mediator"/>
    <property type="evidence" value="ECO:0000314"/>
    <property type="project" value="BHF-UCL"/>
</dbReference>
<dbReference type="GO" id="GO:1902166">
    <property type="term" value="P:negative regulation of intrinsic apoptotic signaling pathway in response to DNA damage by p53 class mediator"/>
    <property type="evidence" value="ECO:0000314"/>
    <property type="project" value="BHF-UCL"/>
</dbReference>
<dbReference type="GO" id="GO:0070374">
    <property type="term" value="P:positive regulation of ERK1 and ERK2 cascade"/>
    <property type="evidence" value="ECO:0000314"/>
    <property type="project" value="BHF-UCL"/>
</dbReference>
<dbReference type="GO" id="GO:0034116">
    <property type="term" value="P:positive regulation of heterotypic cell-cell adhesion"/>
    <property type="evidence" value="ECO:0000315"/>
    <property type="project" value="UniProtKB"/>
</dbReference>
<dbReference type="GO" id="GO:1900625">
    <property type="term" value="P:positive regulation of monocyte aggregation"/>
    <property type="evidence" value="ECO:0000315"/>
    <property type="project" value="BHF-UCL"/>
</dbReference>
<dbReference type="GO" id="GO:2000392">
    <property type="term" value="P:regulation of lamellipodium morphogenesis"/>
    <property type="evidence" value="ECO:0000315"/>
    <property type="project" value="UniProtKB"/>
</dbReference>
<dbReference type="GO" id="GO:0042110">
    <property type="term" value="P:T cell activation"/>
    <property type="evidence" value="ECO:0000314"/>
    <property type="project" value="UniProtKB"/>
</dbReference>
<dbReference type="GO" id="GO:0044319">
    <property type="term" value="P:wound healing, spreading of cells"/>
    <property type="evidence" value="ECO:0000315"/>
    <property type="project" value="UniProtKB"/>
</dbReference>
<dbReference type="CDD" id="cd03516">
    <property type="entry name" value="Link_domain_CD44_like"/>
    <property type="match status" value="1"/>
</dbReference>
<dbReference type="DisProt" id="DP02546"/>
<dbReference type="FunFam" id="3.10.100.10:FF:000004">
    <property type="entry name" value="CD44 antigen isoform X2"/>
    <property type="match status" value="1"/>
</dbReference>
<dbReference type="Gene3D" id="3.10.100.10">
    <property type="entry name" value="Mannose-Binding Protein A, subunit A"/>
    <property type="match status" value="1"/>
</dbReference>
<dbReference type="InterPro" id="IPR016186">
    <property type="entry name" value="C-type_lectin-like/link_sf"/>
</dbReference>
<dbReference type="InterPro" id="IPR001231">
    <property type="entry name" value="CD44_antigen"/>
</dbReference>
<dbReference type="InterPro" id="IPR043210">
    <property type="entry name" value="CD44_antigen-like"/>
</dbReference>
<dbReference type="InterPro" id="IPR016187">
    <property type="entry name" value="CTDL_fold"/>
</dbReference>
<dbReference type="InterPro" id="IPR000538">
    <property type="entry name" value="Link_dom"/>
</dbReference>
<dbReference type="PANTHER" id="PTHR10225:SF6">
    <property type="entry name" value="CD44 ANTIGEN"/>
    <property type="match status" value="1"/>
</dbReference>
<dbReference type="PANTHER" id="PTHR10225">
    <property type="entry name" value="HYALURONAN RECEPTOR"/>
    <property type="match status" value="1"/>
</dbReference>
<dbReference type="Pfam" id="PF00193">
    <property type="entry name" value="Xlink"/>
    <property type="match status" value="1"/>
</dbReference>
<dbReference type="PRINTS" id="PR00658">
    <property type="entry name" value="CD44"/>
</dbReference>
<dbReference type="PRINTS" id="PR01265">
    <property type="entry name" value="LINKMODULE"/>
</dbReference>
<dbReference type="SMART" id="SM00445">
    <property type="entry name" value="LINK"/>
    <property type="match status" value="1"/>
</dbReference>
<dbReference type="SUPFAM" id="SSF56436">
    <property type="entry name" value="C-type lectin-like"/>
    <property type="match status" value="1"/>
</dbReference>
<dbReference type="PROSITE" id="PS01241">
    <property type="entry name" value="LINK_1"/>
    <property type="match status" value="1"/>
</dbReference>
<dbReference type="PROSITE" id="PS50963">
    <property type="entry name" value="LINK_2"/>
    <property type="match status" value="1"/>
</dbReference>
<evidence type="ECO:0000250" key="1"/>
<evidence type="ECO:0000250" key="2">
    <source>
        <dbReference type="UniProtKB" id="P15379"/>
    </source>
</evidence>
<evidence type="ECO:0000255" key="3"/>
<evidence type="ECO:0000255" key="4">
    <source>
        <dbReference type="PROSITE-ProRule" id="PRU00323"/>
    </source>
</evidence>
<evidence type="ECO:0000256" key="5">
    <source>
        <dbReference type="SAM" id="MobiDB-lite"/>
    </source>
</evidence>
<evidence type="ECO:0000269" key="6">
    <source>
    </source>
</evidence>
<evidence type="ECO:0000269" key="7">
    <source>
    </source>
</evidence>
<evidence type="ECO:0000269" key="8">
    <source>
    </source>
</evidence>
<evidence type="ECO:0000269" key="9">
    <source>
    </source>
</evidence>
<evidence type="ECO:0000269" key="10">
    <source>
    </source>
</evidence>
<evidence type="ECO:0000269" key="11">
    <source>
    </source>
</evidence>
<evidence type="ECO:0000269" key="12">
    <source>
    </source>
</evidence>
<evidence type="ECO:0000269" key="13">
    <source>
    </source>
</evidence>
<evidence type="ECO:0000269" key="14">
    <source>
    </source>
</evidence>
<evidence type="ECO:0000269" key="15">
    <source>
    </source>
</evidence>
<evidence type="ECO:0000269" key="16">
    <source>
    </source>
</evidence>
<evidence type="ECO:0000269" key="17">
    <source>
    </source>
</evidence>
<evidence type="ECO:0000269" key="18">
    <source>
    </source>
</evidence>
<evidence type="ECO:0000269" key="19">
    <source>
    </source>
</evidence>
<evidence type="ECO:0000269" key="20">
    <source>
    </source>
</evidence>
<evidence type="ECO:0000269" key="21">
    <source>
    </source>
</evidence>
<evidence type="ECO:0000269" key="22">
    <source>
    </source>
</evidence>
<evidence type="ECO:0000269" key="23">
    <source>
    </source>
</evidence>
<evidence type="ECO:0000269" key="24">
    <source>
    </source>
</evidence>
<evidence type="ECO:0000269" key="25">
    <source>
    </source>
</evidence>
<evidence type="ECO:0000269" key="26">
    <source>
    </source>
</evidence>
<evidence type="ECO:0000269" key="27">
    <source>
    </source>
</evidence>
<evidence type="ECO:0000269" key="28">
    <source>
    </source>
</evidence>
<evidence type="ECO:0000269" key="29">
    <source>
    </source>
</evidence>
<evidence type="ECO:0000269" key="30">
    <source>
    </source>
</evidence>
<evidence type="ECO:0000269" key="31">
    <source>
    </source>
</evidence>
<evidence type="ECO:0000269" key="32">
    <source>
    </source>
</evidence>
<evidence type="ECO:0000269" key="33">
    <source>
    </source>
</evidence>
<evidence type="ECO:0000269" key="34">
    <source>
    </source>
</evidence>
<evidence type="ECO:0000269" key="35">
    <source>
    </source>
</evidence>
<evidence type="ECO:0000269" key="36">
    <source>
    </source>
</evidence>
<evidence type="ECO:0000269" key="37">
    <source>
    </source>
</evidence>
<evidence type="ECO:0000269" key="38">
    <source>
    </source>
</evidence>
<evidence type="ECO:0000269" key="39">
    <source ref="11"/>
</evidence>
<evidence type="ECO:0000303" key="40">
    <source>
    </source>
</evidence>
<evidence type="ECO:0000303" key="41">
    <source>
    </source>
</evidence>
<evidence type="ECO:0000303" key="42">
    <source>
    </source>
</evidence>
<evidence type="ECO:0000303" key="43">
    <source>
    </source>
</evidence>
<evidence type="ECO:0000303" key="44">
    <source>
    </source>
</evidence>
<evidence type="ECO:0000303" key="45">
    <source>
    </source>
</evidence>
<evidence type="ECO:0000303" key="46">
    <source>
    </source>
</evidence>
<evidence type="ECO:0000303" key="47">
    <source>
    </source>
</evidence>
<evidence type="ECO:0000303" key="48">
    <source>
    </source>
</evidence>
<evidence type="ECO:0000303" key="49">
    <source>
    </source>
</evidence>
<evidence type="ECO:0000303" key="50">
    <source>
    </source>
</evidence>
<evidence type="ECO:0000303" key="51">
    <source ref="10"/>
</evidence>
<evidence type="ECO:0000303" key="52">
    <source ref="11"/>
</evidence>
<evidence type="ECO:0000303" key="53">
    <source ref="12"/>
</evidence>
<evidence type="ECO:0000303" key="54">
    <source ref="13"/>
</evidence>
<evidence type="ECO:0000305" key="55"/>
<evidence type="ECO:0007744" key="56">
    <source>
        <dbReference type="PDB" id="4PZ3"/>
    </source>
</evidence>
<evidence type="ECO:0007744" key="57">
    <source>
        <dbReference type="PDB" id="4PZ4"/>
    </source>
</evidence>
<evidence type="ECO:0007744" key="58">
    <source>
    </source>
</evidence>
<evidence type="ECO:0007744" key="59">
    <source>
    </source>
</evidence>
<evidence type="ECO:0007744" key="60">
    <source>
    </source>
</evidence>
<evidence type="ECO:0007744" key="61">
    <source>
    </source>
</evidence>
<evidence type="ECO:0007744" key="62">
    <source>
    </source>
</evidence>
<evidence type="ECO:0007744" key="63">
    <source>
    </source>
</evidence>
<evidence type="ECO:0007829" key="64">
    <source>
        <dbReference type="PDB" id="1POZ"/>
    </source>
</evidence>
<evidence type="ECO:0007829" key="65">
    <source>
        <dbReference type="PDB" id="2I83"/>
    </source>
</evidence>
<evidence type="ECO:0007829" key="66">
    <source>
        <dbReference type="PDB" id="4PZ3"/>
    </source>
</evidence>
<comment type="function">
    <text evidence="11 14 17 20 26 27 35">Cell-surface receptor that plays a role in cell-cell interactions, cell adhesion and migration, helping them to sense and respond to changes in the tissue microenvironment (PubMed:16541107, PubMed:19703720, PubMed:22726066). Participates thereby in a wide variety of cellular functions including the activation, recirculation and homing of T-lymphocytes, hematopoiesis, inflammation and response to bacterial infection (PubMed:7528188). Engages, through its ectodomain, extracellular matrix components such as hyaluronan/HA, collagen, growth factors, cytokines or proteases and serves as a platform for signal transduction by assembling, via its cytoplasmic domain, protein complexes containing receptor kinases and membrane proteases (PubMed:18757307, PubMed:23589287). Such effectors include PKN2, the RhoGTPases RAC1 and RHOA, Rho-kinases and phospholipase C that coordinate signaling pathways promoting calcium mobilization and actin-mediated cytoskeleton reorganization essential for cell migration and adhesion (PubMed:15123640).</text>
</comment>
<comment type="subunit">
    <text evidence="2 10 11 15 17 19 24 27 28">Interacts with PKN2 (PubMed:15123640). Interacts with TIAM1 and TIAM2 (By similarity). Interacts with HA, as well as other glycosaminoglycans, collagen, laminin, and fibronectin via its N-terminal segment (PubMed:14992719, PubMed:17085435, PubMed:25195884). Interacts with UNC119 (PubMed:19381274). Interacts with PDPN (via extracellular domain); this interaction is required for PDPN-mediated directional migration and regulation of lamellipodia extension/stabilization during cell spreading and migration (PubMed:20962267). Interacts with RDX, EZR and MSN (By similarity). Interacts with EGFR (PubMed:18757307, PubMed:23589287). Interacts with CD74; this complex is essential for the MIF-induced signaling cascade that results in B cell survival (By similarity).</text>
</comment>
<comment type="interaction">
    <interactant intactId="EBI-490245">
        <id>P16070</id>
    </interactant>
    <interactant intactId="EBI-2622890">
        <id>P04233</id>
        <label>CD74</label>
    </interactant>
    <organismsDiffer>false</organismsDiffer>
    <experiments>9</experiments>
</comment>
<comment type="interaction">
    <interactant intactId="EBI-490245">
        <id>P16070</id>
    </interactant>
    <interactant intactId="EBI-528768">
        <id>P26038</id>
        <label>MSN</label>
    </interactant>
    <organismsDiffer>false</organismsDiffer>
    <experiments>6</experiments>
</comment>
<comment type="interaction">
    <interactant intactId="EBI-490245">
        <id>P16070</id>
    </interactant>
    <interactant intactId="EBI-3843348">
        <id>Q9UPY5</id>
        <label>SLC7A11</label>
    </interactant>
    <organismsDiffer>false</organismsDiffer>
    <experiments>4</experiments>
</comment>
<comment type="interaction">
    <interactant intactId="EBI-490245">
        <id>P16070</id>
    </interactant>
    <interactant intactId="EBI-490239">
        <id>P18011</id>
        <label>sctE</label>
    </interactant>
    <organismsDiffer>true</organismsDiffer>
    <experiments>4</experiments>
</comment>
<comment type="subcellular location">
    <subcellularLocation>
        <location evidence="26 27">Cell membrane</location>
        <topology evidence="3">Single-pass type I membrane protein</topology>
    </subcellularLocation>
    <subcellularLocation>
        <location evidence="2">Cell projection</location>
        <location evidence="2">Microvillus</location>
    </subcellularLocation>
    <subcellularLocation>
        <location evidence="29 32 33">Secreted</location>
    </subcellularLocation>
    <text evidence="2 27">Colocalizes with actin in membrane protrusions at wounding edges. Co-localizes with RDX, EZR and MSN in microvilli. Localizes to cholesterol-rich membrane-bound lipid raft domains.</text>
</comment>
<comment type="alternative products">
    <event type="alternative splicing"/>
    <isoform>
        <id>P16070-1</id>
        <name>1</name>
        <name>CD44</name>
        <sequence type="displayed"/>
    </isoform>
    <isoform>
        <id>P16070-2</id>
        <name>2</name>
        <name>CD44SP</name>
        <sequence type="described" ref="VSP_005303 VSP_005304"/>
    </isoform>
    <isoform>
        <id>P16070-3</id>
        <name>3</name>
        <sequence type="described" ref="VSP_005305 VSP_005306"/>
    </isoform>
    <isoform>
        <id>P16070-4</id>
        <name>4</name>
        <name>Epidermal</name>
        <sequence type="described" ref="VSP_005307 VSP_005308"/>
    </isoform>
    <isoform>
        <id>P16070-5</id>
        <name>5</name>
        <sequence type="described" ref="VSP_005313"/>
    </isoform>
    <isoform>
        <id>P16070-6</id>
        <name>6</name>
        <sequence type="described" ref="VSP_005314 VSP_005315"/>
    </isoform>
    <isoform>
        <id>P16070-7</id>
        <name>7</name>
        <sequence type="described" ref="VSP_005316 VSP_005317"/>
    </isoform>
    <isoform>
        <id>P16070-8</id>
        <name>8</name>
        <sequence type="described" ref="VSP_005318 VSP_005319"/>
    </isoform>
    <isoform>
        <id>P16070-9</id>
        <name>9</name>
        <sequence type="described" ref="VSP_005320 VSP_005321"/>
    </isoform>
    <isoform>
        <id>P16070-10</id>
        <name>10</name>
        <name>CD44E</name>
        <name>CD44R1</name>
        <name>Epithelial</name>
        <name>Keratinocyte</name>
        <sequence type="described" ref="VSP_005309 VSP_005310"/>
    </isoform>
    <isoform>
        <id>P16070-11</id>
        <name>11</name>
        <name>CD44R2</name>
        <sequence type="described" ref="VSP_022797"/>
    </isoform>
    <isoform>
        <id>P16070-12</id>
        <name>12</name>
        <name>CDw44</name>
        <name>Reticulocyte</name>
        <sequence type="described" ref="VSP_005311 VSP_005312"/>
    </isoform>
    <isoform>
        <id>P16070-13</id>
        <name>13</name>
        <name>CD44R4</name>
        <sequence type="described" ref="VSP_005309 VSP_005310 VSP_005318 VSP_005319"/>
    </isoform>
    <isoform>
        <id>P16070-14</id>
        <name>14</name>
        <name>CD44R5</name>
        <sequence type="described" ref="VSP_005309 VSP_005310 VSP_005316 VSP_005317 VSP_005318 VSP_005319"/>
    </isoform>
    <isoform>
        <id>P16070-15</id>
        <name>15</name>
        <name>Hermes</name>
        <sequence type="described" ref="VSP_005311 VSP_005312 VSP_005320 VSP_005321"/>
    </isoform>
    <isoform>
        <id>P16070-16</id>
        <name>16</name>
        <sequence type="described" ref="VSP_005305 VSP_005306 VSP_005314 VSP_005315"/>
    </isoform>
    <isoform>
        <id>P16070-17</id>
        <name>17</name>
        <sequence type="described" ref="VSP_005313 VSP_005314 VSP_005315"/>
    </isoform>
    <isoform>
        <id>P16070-18</id>
        <name>18</name>
        <sequence type="described" ref="VSP_005311 VSP_005312 VSP_043575"/>
    </isoform>
    <isoform>
        <id>P16070-19</id>
        <name>19</name>
        <name>CD44RC</name>
        <sequence type="described" ref="VSP_043870 VSP_043871"/>
    </isoform>
    <text evidence="9">Additional isoforms seem to exist. Additional isoforms are produced by alternative splicing of 10 out of 19 exons within the extracellular domain. Additional diversity is generated through the utilization of internal splice donor and acceptor sites within 2 of the exons. A variation in the cytoplasmic domain was shown to result from the alternative splicing of 2 exons. Isoform CD44 is expected to be expressed in normal cells. Splice variants have been found in many tumor cell lines. Exons 5, 6, 7, 8, 9, 10, 11, 13, 14 and 19 are alternatively spliced. Experimental confirmation may be lacking for some isoforms.</text>
</comment>
<comment type="tissue specificity">
    <text evidence="29 31 32 33">Detected in fibroblasts and urine (at protein level) (PubMed:25326458, PubMed:36213313, PubMed:37453717). Detected in placenta (at protein level) (PubMed:32337544). Isoform 10 (epithelial isoform) is expressed by cells of epithelium and highly expressed by carcinomas. Expression is repressed in neuroblastoma cells.</text>
</comment>
<comment type="developmental stage">
    <text evidence="30">Expressed in the developing retina between 16 and 19 weeks post-conception, specifically in the outer neuroblastic zone, inner neuroblastic zone, interphotoreceptor zone and the retinal pigment epithelium (at protein level).</text>
</comment>
<comment type="domain">
    <text evidence="1">The lectin-like LINK domain is responsible for hyaluronan binding.</text>
</comment>
<comment type="PTM">
    <text evidence="8">Proteolytically cleaved in the extracellular matrix by specific proteinases (possibly MMPs) in several cell lines and tumors.</text>
</comment>
<comment type="PTM">
    <text evidence="8 13 18 25">N-glycosylated.</text>
</comment>
<comment type="PTM">
    <text evidence="8 25 29">O-glycosylated; contains chondroitin sulfate glycans which can be more or less sulfated and whose number may affect the accessibility of specific proteinases to their cleavage site(s). It is uncertain if O-glycosylation occurs on Thr-637 or Thr-638.</text>
</comment>
<comment type="PTM">
    <text evidence="6 38">Phosphorylated; activation of PKC results in the dephosphorylation of Ser-706 (constitutive phosphorylation site), and the phosphorylation of Ser-672.</text>
</comment>
<comment type="polymorphism">
    <text evidence="37">CD44 is responsible for the Indian blood group system. The molecular basis of the In(A)=In1/In(B)=In2 blood group antigens is a single variation in position 46; In(B), the most frequent allele, has Arg-46.</text>
</comment>
<comment type="miscellaneous">
    <molecule>Isoform 1</molecule>
    <text>Corresponds to the largest isoform.</text>
</comment>
<comment type="miscellaneous">
    <molecule>Isoform 3</molecule>
    <text evidence="55">Alternative splice donor/acceptor on exon 5.</text>
</comment>
<comment type="miscellaneous">
    <molecule>Isoform 4</molecule>
    <text evidence="55">Lacks exon 6.</text>
</comment>
<comment type="miscellaneous">
    <molecule>Isoform 5</molecule>
    <text evidence="55">Alternative splice donor/acceptor on exon 7.</text>
</comment>
<comment type="miscellaneous">
    <molecule>Isoform 6</molecule>
    <text evidence="55">Lacks exon 10.</text>
</comment>
<comment type="miscellaneous">
    <molecule>Isoform 7</molecule>
    <text evidence="55">Lacks exon 13.</text>
</comment>
<comment type="miscellaneous">
    <molecule>Isoform 8</molecule>
    <text evidence="55">Lacks exon 14.</text>
</comment>
<comment type="miscellaneous">
    <molecule>Isoform 9</molecule>
    <text evidence="55">Lacks exon 19.</text>
</comment>
<comment type="miscellaneous">
    <molecule>Isoform 10</molecule>
    <text evidence="55">Lacks exons 6-11.</text>
</comment>
<comment type="miscellaneous">
    <molecule>Isoform 11</molecule>
    <text evidence="55">Lacks exons 6-13.</text>
</comment>
<comment type="miscellaneous">
    <molecule>Isoform 12</molecule>
    <text evidence="55">Lacks exons 6-14.</text>
</comment>
<comment type="miscellaneous">
    <molecule>Isoform 13</molecule>
    <text evidence="55">Lacks exons 6-11 and exon 14.</text>
</comment>
<comment type="miscellaneous">
    <molecule>Isoform 14</molecule>
    <text evidence="55">Lacks exons 6-11, exon 13 and exon 14.</text>
</comment>
<comment type="miscellaneous">
    <molecule>Isoform 15</molecule>
    <text evidence="55">Lacks exons 6-14 and exon 19.</text>
</comment>
<comment type="miscellaneous">
    <molecule>Isoform 16</molecule>
    <text evidence="55">Alternative splice donor/acceptor on exon 5 and lacks exon 10.</text>
</comment>
<comment type="miscellaneous">
    <molecule>Isoform 17</molecule>
    <text evidence="55">Alternative splice donor/acceptor on exon 7 and lacks exon 10.</text>
</comment>
<comment type="miscellaneous">
    <molecule>Isoform 19</molecule>
    <text evidence="55">Soluble isoform, has enhanced hyaluronan binding.</text>
</comment>
<comment type="online information" name="Wikipedia">
    <link uri="https://en.wikipedia.org/wiki/CD44"/>
    <text>CD44 entry</text>
</comment>
<comment type="online information" name="Atlas of Genetics and Cytogenetics in Oncology and Haematology">
    <link uri="https://atlasgeneticsoncology.org/gene/980/cd44-(cd44-molecule-(indian-blood-group))"/>
</comment>
<proteinExistence type="evidence at protein level"/>
<feature type="signal peptide" evidence="1">
    <location>
        <begin position="1"/>
        <end position="20"/>
    </location>
</feature>
<feature type="chain" id="PRO_0000026687" description="CD44 antigen">
    <location>
        <begin position="21"/>
        <end position="742"/>
    </location>
</feature>
<feature type="topological domain" description="Extracellular" evidence="3">
    <location>
        <begin position="21"/>
        <end position="649"/>
    </location>
</feature>
<feature type="transmembrane region" description="Helical" evidence="3">
    <location>
        <begin position="650"/>
        <end position="670"/>
    </location>
</feature>
<feature type="topological domain" description="Cytoplasmic" evidence="3">
    <location>
        <begin position="671"/>
        <end position="742"/>
    </location>
</feature>
<feature type="domain" description="Link" evidence="4">
    <location>
        <begin position="32"/>
        <end position="120"/>
    </location>
</feature>
<feature type="region of interest" description="Disordered" evidence="5">
    <location>
        <begin position="160"/>
        <end position="189"/>
    </location>
</feature>
<feature type="region of interest" description="Stem">
    <location>
        <begin position="224"/>
        <end position="649"/>
    </location>
</feature>
<feature type="region of interest" description="Disordered" evidence="5">
    <location>
        <begin position="261"/>
        <end position="285"/>
    </location>
</feature>
<feature type="region of interest" description="Disordered" evidence="5">
    <location>
        <begin position="372"/>
        <end position="558"/>
    </location>
</feature>
<feature type="region of interest" description="Disordered" evidence="5">
    <location>
        <begin position="590"/>
        <end position="642"/>
    </location>
</feature>
<feature type="region of interest" description="Required for interaction with EZR, MSN and RDX and for co-localization to microvilli" evidence="2">
    <location>
        <begin position="673"/>
        <end position="691"/>
    </location>
</feature>
<feature type="compositionally biased region" description="Low complexity" evidence="5">
    <location>
        <begin position="179"/>
        <end position="189"/>
    </location>
</feature>
<feature type="compositionally biased region" description="Polar residues" evidence="5">
    <location>
        <begin position="261"/>
        <end position="273"/>
    </location>
</feature>
<feature type="compositionally biased region" description="Low complexity" evidence="5">
    <location>
        <begin position="386"/>
        <end position="396"/>
    </location>
</feature>
<feature type="compositionally biased region" description="Basic and acidic residues" evidence="5">
    <location>
        <begin position="407"/>
        <end position="421"/>
    </location>
</feature>
<feature type="compositionally biased region" description="Low complexity" evidence="5">
    <location>
        <begin position="422"/>
        <end position="435"/>
    </location>
</feature>
<feature type="compositionally biased region" description="Polar residues" evidence="5">
    <location>
        <begin position="439"/>
        <end position="452"/>
    </location>
</feature>
<feature type="compositionally biased region" description="Polar residues" evidence="5">
    <location>
        <begin position="476"/>
        <end position="489"/>
    </location>
</feature>
<feature type="compositionally biased region" description="Low complexity" evidence="5">
    <location>
        <begin position="502"/>
        <end position="516"/>
    </location>
</feature>
<feature type="compositionally biased region" description="Polar residues" evidence="5">
    <location>
        <begin position="528"/>
        <end position="539"/>
    </location>
</feature>
<feature type="compositionally biased region" description="Polar residues" evidence="5">
    <location>
        <begin position="592"/>
        <end position="606"/>
    </location>
</feature>
<feature type="compositionally biased region" description="Basic and acidic residues" evidence="5">
    <location>
        <begin position="619"/>
        <end position="629"/>
    </location>
</feature>
<feature type="binding site" evidence="1">
    <location>
        <position position="41"/>
    </location>
    <ligand>
        <name>hyaluronan</name>
        <dbReference type="ChEBI" id="CHEBI:132153"/>
    </ligand>
</feature>
<feature type="binding site" evidence="1">
    <location>
        <position position="78"/>
    </location>
    <ligand>
        <name>hyaluronan</name>
        <dbReference type="ChEBI" id="CHEBI:132153"/>
    </ligand>
</feature>
<feature type="binding site" evidence="1">
    <location>
        <position position="79"/>
    </location>
    <ligand>
        <name>hyaluronan</name>
        <dbReference type="ChEBI" id="CHEBI:132153"/>
    </ligand>
</feature>
<feature type="binding site" evidence="1">
    <location>
        <position position="105"/>
    </location>
    <ligand>
        <name>hyaluronan</name>
        <dbReference type="ChEBI" id="CHEBI:132153"/>
    </ligand>
</feature>
<feature type="modified residue" description="Phosphoserine; by PKC" evidence="6">
    <location>
        <position position="672"/>
    </location>
</feature>
<feature type="modified residue" description="Phosphoserine" evidence="58 61 63">
    <location>
        <position position="686"/>
    </location>
</feature>
<feature type="modified residue" description="Phosphoserine" evidence="2">
    <location>
        <position position="697"/>
    </location>
</feature>
<feature type="modified residue" description="Phosphoserine" evidence="38 58 59 60 61 62 63">
    <location>
        <position position="706"/>
    </location>
</feature>
<feature type="glycosylation site" description="N-linked (GlcNAc...) asparagine" evidence="3">
    <location>
        <position position="25"/>
    </location>
</feature>
<feature type="glycosylation site" description="N-linked (GlcNAc...) asparagine" evidence="13 18">
    <location>
        <position position="57"/>
    </location>
</feature>
<feature type="glycosylation site" description="N-linked (GlcNAc...) asparagine" evidence="3">
    <location>
        <position position="100"/>
    </location>
</feature>
<feature type="glycosylation site" description="N-linked (GlcNAc...) asparagine" evidence="18">
    <location>
        <position position="110"/>
    </location>
</feature>
<feature type="glycosylation site" description="N-linked (GlcNAc...) asparagine" evidence="3">
    <location>
        <position position="120"/>
    </location>
</feature>
<feature type="glycosylation site" description="O-linked (Xyl...) (chondroitin sulfate) serine" evidence="29 31 32 33">
    <location>
        <position position="180"/>
    </location>
</feature>
<feature type="glycosylation site" description="N-linked (GlcNAc...) asparagine" evidence="3">
    <location>
        <position position="350"/>
    </location>
</feature>
<feature type="glycosylation site" description="N-linked (GlcNAc...) asparagine" evidence="3">
    <location>
        <position position="548"/>
    </location>
</feature>
<feature type="glycosylation site" description="N-linked (GlcNAc...) asparagine" evidence="3">
    <location>
        <position position="599"/>
    </location>
</feature>
<feature type="glycosylation site" description="N-linked (GlcNAc...) asparagine" evidence="3">
    <location>
        <position position="636"/>
    </location>
</feature>
<feature type="disulfide bond" evidence="28 56 57">
    <location>
        <begin position="28"/>
        <end position="129"/>
    </location>
</feature>
<feature type="disulfide bond" evidence="28 56 57">
    <location>
        <begin position="53"/>
        <end position="118"/>
    </location>
</feature>
<feature type="disulfide bond" evidence="28 56 57">
    <location>
        <begin position="77"/>
        <end position="97"/>
    </location>
</feature>
<feature type="splice variant" id="VSP_005303" description="In isoform 2." evidence="50">
    <original>DLNITCR</original>
    <variation>GVGRRKS</variation>
    <location>
        <begin position="23"/>
        <end position="29"/>
    </location>
</feature>
<feature type="splice variant" id="VSP_005304" description="In isoform 2." evidence="50">
    <location>
        <begin position="30"/>
        <end position="742"/>
    </location>
</feature>
<feature type="splice variant" id="VSP_043870" description="In isoform 19." evidence="40">
    <original>RYGFIEGHVVIPRIHPNSICAANNTGVYILTSNTSQYDTYCFNASAPPEEDCTSVTDLPNAF</original>
    <variation>SLHCSQQSKKVWAEEKASDQQWQWSCGGQKAKWTQRRGQQVSGNGAFGEQGVVRNSRPVYDS</variation>
    <location>
        <begin position="78"/>
        <end position="139"/>
    </location>
</feature>
<feature type="splice variant" id="VSP_043871" description="In isoform 19." evidence="40">
    <location>
        <begin position="140"/>
        <end position="742"/>
    </location>
</feature>
<feature type="splice variant" id="VSP_005305" description="In isoform 3 and isoform 16." evidence="55">
    <original>G</original>
    <variation>A</variation>
    <location>
        <position position="192"/>
    </location>
</feature>
<feature type="splice variant" id="VSP_005306" description="In isoform 3 and isoform 16." evidence="55">
    <location>
        <begin position="193"/>
        <end position="223"/>
    </location>
</feature>
<feature type="splice variant" id="VSP_022797" description="In isoform 11." evidence="47 53">
    <location>
        <begin position="223"/>
        <end position="535"/>
    </location>
</feature>
<feature type="splice variant" id="VSP_005309" description="In isoform 10, isoform 13 and isoform 14." evidence="45 46 47 50 52">
    <original>T</original>
    <variation>N</variation>
    <location>
        <position position="223"/>
    </location>
</feature>
<feature type="splice variant" id="VSP_005311" description="In isoform 12, isoform 15 and isoform 18." evidence="42 43 44 48 49 51 52 54">
    <original>T</original>
    <variation>R</variation>
    <location>
        <position position="223"/>
    </location>
</feature>
<feature type="splice variant" id="VSP_005307" description="In isoform 4." evidence="41 42">
    <original>T</original>
    <variation>S</variation>
    <location>
        <position position="223"/>
    </location>
</feature>
<feature type="splice variant" id="VSP_005312" description="In isoform 12, isoform 15 and isoform 18." evidence="42 43 44 48 49 51 52 54">
    <location>
        <begin position="224"/>
        <end position="604"/>
    </location>
</feature>
<feature type="splice variant" id="VSP_005310" description="In isoform 10, isoform 13 and isoform 14." evidence="45 46 47 50 52">
    <location>
        <begin position="224"/>
        <end position="472"/>
    </location>
</feature>
<feature type="splice variant" id="VSP_005308" description="In isoform 4." evidence="41 42">
    <location>
        <begin position="224"/>
        <end position="266"/>
    </location>
</feature>
<feature type="splice variant" id="VSP_005313" description="In isoform 5 and isoform 17." evidence="55">
    <location>
        <begin position="266"/>
        <end position="273"/>
    </location>
</feature>
<feature type="splice variant" id="VSP_005314" description="In isoform 6, isoform 16 and isoform 17." evidence="55">
    <original>I</original>
    <variation>T</variation>
    <location>
        <position position="385"/>
    </location>
</feature>
<feature type="splice variant" id="VSP_005315" description="In isoform 6, isoform 16 and isoform 17." evidence="55">
    <location>
        <begin position="386"/>
        <end position="428"/>
    </location>
</feature>
<feature type="splice variant" id="VSP_005316" description="In isoform 7 and isoform 14." evidence="50">
    <original>Q</original>
    <variation>R</variation>
    <location>
        <position position="506"/>
    </location>
</feature>
<feature type="splice variant" id="VSP_005317" description="In isoform 7 and isoform 14." evidence="50">
    <location>
        <begin position="507"/>
        <end position="535"/>
    </location>
</feature>
<feature type="splice variant" id="VSP_005318" description="In isoform 8, isoform 13 and isoform 14." evidence="50">
    <original>N</original>
    <variation>R</variation>
    <location>
        <position position="536"/>
    </location>
</feature>
<feature type="splice variant" id="VSP_005319" description="In isoform 8, isoform 13 and isoform 14." evidence="50">
    <location>
        <begin position="537"/>
        <end position="604"/>
    </location>
</feature>
<feature type="splice variant" id="VSP_043575" description="In isoform 18." evidence="54">
    <location>
        <begin position="605"/>
        <end position="625"/>
    </location>
</feature>
<feature type="splice variant" id="VSP_005320" description="In isoform 9 and isoform 15." evidence="49">
    <original>R</original>
    <variation>S</variation>
    <location>
        <position position="675"/>
    </location>
</feature>
<feature type="splice variant" id="VSP_005321" description="In isoform 9 and isoform 15." evidence="49">
    <location>
        <begin position="676"/>
        <end position="742"/>
    </location>
</feature>
<feature type="sequence variant" id="VAR_006490" description="In In(A) antigen; dbSNP:rs369473842." evidence="37">
    <original>R</original>
    <variation>P</variation>
    <location>
        <position position="46"/>
    </location>
</feature>
<feature type="sequence variant" id="VAR_030325" description="In dbSNP:rs11607491.">
    <original>T</original>
    <variation>M</variation>
    <location>
        <position position="393"/>
    </location>
</feature>
<feature type="sequence variant" id="VAR_021147" description="In dbSNP:rs9666607." evidence="9 12 16 34">
    <original>K</original>
    <variation>R</variation>
    <location>
        <position position="417"/>
    </location>
</feature>
<feature type="sequence variant" id="VAR_030326" description="In dbSNP:rs1467558." evidence="7 9 12 21 22 23 34 36 39">
    <original>I</original>
    <variation>T</variation>
    <location>
        <position position="479"/>
    </location>
</feature>
<feature type="sequence variant" id="VAR_030327" description="In dbSNP:rs12273397." evidence="34">
    <original>D</original>
    <variation>H</variation>
    <location>
        <position position="494"/>
    </location>
</feature>
<feature type="sequence conflict" description="In Ref. 10; AAA82949." evidence="55" ref="10">
    <original>I</original>
    <variation>M</variation>
    <location>
        <position position="26"/>
    </location>
</feature>
<feature type="sequence conflict" description="In Ref. 1; AAA35674, 2; AAA51950, 3; CAA38951 and 7; CAB61878." evidence="55" ref="1 2 3 7">
    <original>S</original>
    <variation>Y</variation>
    <location>
        <position position="109"/>
    </location>
</feature>
<feature type="sequence conflict" description="In Ref. 3; CAA38951." evidence="55" ref="3">
    <original>A</original>
    <variation>R</variation>
    <location>
        <position position="221"/>
    </location>
</feature>
<feature type="sequence conflict" description="In Ref. 7; CAB61878." evidence="55" ref="7">
    <original>T</original>
    <variation>A</variation>
    <location>
        <position position="241"/>
    </location>
</feature>
<feature type="sequence conflict" description="In Ref. 5; CAA47271." evidence="55" ref="5">
    <original>E</original>
    <variation>V</variation>
    <location>
        <position position="410"/>
    </location>
</feature>
<feature type="sequence conflict" description="In Ref. 7; CAB61878." evidence="55" ref="7">
    <original>D</original>
    <variation>N</variation>
    <location>
        <position position="494"/>
    </location>
</feature>
<feature type="sequence conflict" description="In Ref. 3; CAA38951." evidence="55" ref="3">
    <original>T</original>
    <variation>H</variation>
    <location>
        <position position="555"/>
    </location>
</feature>
<feature type="sequence conflict" description="In Ref. 1; AAA35674." evidence="55" ref="1">
    <original>G</original>
    <variation>E</variation>
    <location>
        <position position="620"/>
    </location>
</feature>
<feature type="sequence conflict" description="In Ref. 11; AAM50041 and 16; AAH67348." evidence="55" ref="11 16">
    <original>S</original>
    <variation>I</variation>
    <location>
        <position position="697"/>
    </location>
</feature>
<feature type="strand" evidence="66">
    <location>
        <begin position="21"/>
        <end position="26"/>
    </location>
</feature>
<feature type="strand" evidence="66">
    <location>
        <begin position="33"/>
        <end position="38"/>
    </location>
</feature>
<feature type="helix" evidence="66">
    <location>
        <begin position="46"/>
        <end position="55"/>
    </location>
</feature>
<feature type="strand" evidence="64">
    <location>
        <begin position="57"/>
        <end position="59"/>
    </location>
</feature>
<feature type="helix" evidence="66">
    <location>
        <begin position="63"/>
        <end position="71"/>
    </location>
</feature>
<feature type="strand" evidence="66">
    <location>
        <begin position="80"/>
        <end position="82"/>
    </location>
</feature>
<feature type="strand" evidence="66">
    <location>
        <begin position="85"/>
        <end position="92"/>
    </location>
</feature>
<feature type="helix" evidence="66">
    <location>
        <begin position="98"/>
        <end position="100"/>
    </location>
</feature>
<feature type="strand" evidence="66">
    <location>
        <begin position="103"/>
        <end position="106"/>
    </location>
</feature>
<feature type="strand" evidence="64">
    <location>
        <begin position="109"/>
        <end position="111"/>
    </location>
</feature>
<feature type="strand" evidence="66">
    <location>
        <begin position="114"/>
        <end position="119"/>
    </location>
</feature>
<feature type="strand" evidence="65">
    <location>
        <begin position="121"/>
        <end position="123"/>
    </location>
</feature>
<feature type="strand" evidence="66">
    <location>
        <begin position="125"/>
        <end position="128"/>
    </location>
</feature>
<feature type="strand" evidence="65">
    <location>
        <begin position="130"/>
        <end position="132"/>
    </location>
</feature>
<feature type="strand" evidence="66">
    <location>
        <begin position="139"/>
        <end position="148"/>
    </location>
</feature>
<feature type="turn" evidence="64">
    <location>
        <begin position="150"/>
        <end position="152"/>
    </location>
</feature>
<feature type="strand" evidence="66">
    <location>
        <begin position="154"/>
        <end position="160"/>
    </location>
</feature>
<feature type="helix" evidence="66">
    <location>
        <begin position="165"/>
        <end position="168"/>
    </location>
</feature>
<organism>
    <name type="scientific">Homo sapiens</name>
    <name type="common">Human</name>
    <dbReference type="NCBI Taxonomy" id="9606"/>
    <lineage>
        <taxon>Eukaryota</taxon>
        <taxon>Metazoa</taxon>
        <taxon>Chordata</taxon>
        <taxon>Craniata</taxon>
        <taxon>Vertebrata</taxon>
        <taxon>Euteleostomi</taxon>
        <taxon>Mammalia</taxon>
        <taxon>Eutheria</taxon>
        <taxon>Euarchontoglires</taxon>
        <taxon>Primates</taxon>
        <taxon>Haplorrhini</taxon>
        <taxon>Catarrhini</taxon>
        <taxon>Hominidae</taxon>
        <taxon>Homo</taxon>
    </lineage>
</organism>
<gene>
    <name type="primary">CD44</name>
    <name type="synonym">LHR</name>
    <name type="synonym">MDU2</name>
    <name type="synonym">MDU3</name>
    <name type="synonym">MIC4</name>
</gene>
<accession>P16070</accession>
<accession>A5YRN9</accession>
<accession>B6EAT9</accession>
<accession>D3DR12</accession>
<accession>D3DR13</accession>
<accession>O95370</accession>
<accession>P22511</accession>
<accession>Q04858</accession>
<accession>Q13419</accession>
<accession>Q13957</accession>
<accession>Q13958</accession>
<accession>Q13959</accession>
<accession>Q13960</accession>
<accession>Q13961</accession>
<accession>Q13967</accession>
<accession>Q13968</accession>
<accession>Q13980</accession>
<accession>Q15861</accession>
<accession>Q16064</accession>
<accession>Q16065</accession>
<accession>Q16066</accession>
<accession>Q16208</accession>
<accession>Q16522</accession>
<accession>Q86T72</accession>
<accession>Q86Z27</accession>
<accession>Q8N694</accession>
<accession>Q92493</accession>
<accession>Q96J24</accession>
<accession>Q9H5A5</accession>
<accession>Q9UC28</accession>
<accession>Q9UC29</accession>
<accession>Q9UC30</accession>
<accession>Q9UCB0</accession>
<accession>Q9UJ36</accession>
<protein>
    <recommendedName>
        <fullName>CD44 antigen</fullName>
    </recommendedName>
    <alternativeName>
        <fullName>CDw44</fullName>
    </alternativeName>
    <alternativeName>
        <fullName>Epican</fullName>
    </alternativeName>
    <alternativeName>
        <fullName>Extracellular matrix receptor III</fullName>
        <shortName>ECMR-III</shortName>
    </alternativeName>
    <alternativeName>
        <fullName>GP90 lymphocyte homing/adhesion receptor</fullName>
    </alternativeName>
    <alternativeName>
        <fullName>HUTCH-I</fullName>
    </alternativeName>
    <alternativeName>
        <fullName>Heparan sulfate proteoglycan</fullName>
    </alternativeName>
    <alternativeName>
        <fullName>Hermes antigen</fullName>
    </alternativeName>
    <alternativeName>
        <fullName>Hyaluronate receptor</fullName>
    </alternativeName>
    <alternativeName>
        <fullName>Phagocytic glycoprotein 1</fullName>
        <shortName>PGP-1</shortName>
    </alternativeName>
    <alternativeName>
        <fullName>Phagocytic glycoprotein I</fullName>
        <shortName>PGP-I</shortName>
    </alternativeName>
    <cdAntigenName>CD44</cdAntigenName>
</protein>
<sequence>MDKFWWHAAWGLCLVPLSLAQIDLNITCRFAGVFHVEKNGRYSISRTEAADLCKAFNSTLPTMAQMEKALSIGFETCRYGFIEGHVVIPRIHPNSICAANNTGVYILTSNTSQYDTYCFNASAPPEEDCTSVTDLPNAFDGPITITIVNRDGTRYVQKGEYRTNPEDIYPSNPTDDDVSSGSSSERSSTSGGYIFYTFSTVHPIPDEDSPWITDSTDRIPATTLMSTSATATETATKRQETWDWFSWLFLPSESKNHLHTTTQMAGTSSNTISAGWEPNEENEDERDRHLSFSGSGIDDDEDFISSTISTTPRAFDHTKQNQDWTQWNPSHSNPEVLLQTTTRMTDVDRNGTTAYEGNWNPEAHPPLIHHEHHEEEETPHSTSTIQATPSSTTEETATQKEQWFGNRWHEGYRQTPKEDSHSTTGTAAASAHTSHPMQGRTTPSPEDSSWTDFFNPISHPMGRGHQAGRRMDMDSSHSITLQPTANPNTGLVEDLDRTGPLSMTTQQSNSQSFSTSHEGLEEDKDHPTTSTLTSSNRNDVTGGRRDPNHSEGSTTLLEGYTSHYPHTKESRTFIPVTSAKTGSFGVTAVTVGDSNSNVNRSLSGDQDTFHPSGGSHTTHGSESDGHSHGSQEGGANTTSGPIRTPQIPEWLIILASLLALALILAVCIAVNSRRRCGQKKKLVINSGNGAVEDRKPSGLNGEASKSQEMVHLVNKESSETPDQFMTADETRNLQNVDMKIGV</sequence>
<reference key="1">
    <citation type="journal article" date="1989" name="Cell">
        <title>A lymphocyte molecule implicated in lymph node homing is a member of the cartilage link protein family.</title>
        <authorList>
            <person name="Stamenkovic I."/>
            <person name="Amiot M."/>
            <person name="Pesando J.M."/>
            <person name="Seed B."/>
        </authorList>
    </citation>
    <scope>NUCLEOTIDE SEQUENCE [MRNA] (ISOFORM 12)</scope>
</reference>
<reference key="2">
    <citation type="journal article" date="1991" name="Biochem. Biophys. Res. Commun.">
        <title>The multispecific cell adhesion molecule CD44 is represented in reticulocyte cDNA.</title>
        <authorList>
            <person name="Harn H.-J."/>
            <person name="Isola N."/>
            <person name="Cooper D.L."/>
        </authorList>
    </citation>
    <scope>NUCLEOTIDE SEQUENCE [MRNA] (ISOFORM 12)</scope>
    <source>
        <tissue>Reticulocyte</tissue>
    </source>
</reference>
<reference key="3">
    <citation type="journal article" date="1991" name="EMBO J.">
        <title>The hematopoietic and epithelial forms of CD44 are distinct polypeptides with different adhesion potentials for hyaluronate-bearing cells.</title>
        <authorList>
            <person name="Stamenkovic I."/>
            <person name="Aruffo A."/>
            <person name="Amiot M."/>
            <person name="Seed B."/>
        </authorList>
    </citation>
    <scope>NUCLEOTIDE SEQUENCE [MRNA] (ISOFORM 10)</scope>
    <scope>VARIANT THR-479</scope>
</reference>
<reference key="4">
    <citation type="journal article" date="1991" name="J. Exp. Med.">
        <title>Molecular cloning of CD44R1 and CD44R2, two novel isoforms of the human CD44 lymphocyte 'homing' receptor expressed by hemopoietic cells.</title>
        <authorList>
            <person name="Dougherty G.J."/>
            <person name="Lansdorp P.M."/>
            <person name="Cooper D.L."/>
            <person name="Humphries R.K."/>
        </authorList>
    </citation>
    <scope>NUCLEOTIDE SEQUENCE [MRNA] (ISOFORMS 10 AND 11)</scope>
    <scope>VARIANT THR-479</scope>
    <source>
        <tissue>Myeloid leukemia cell</tissue>
    </source>
</reference>
<reference key="5">
    <citation type="journal article" date="1992" name="J. Invest. Dermatol.">
        <title>The core protein of epican, a heparan sulfate proteoglycan on keratinocytes, is an alternative form of CD44.</title>
        <authorList>
            <person name="Kugelman L.C."/>
            <person name="Ganguly S."/>
            <person name="Haggerty J.G."/>
            <person name="Weissman S.M."/>
            <person name="Milstone L.M."/>
        </authorList>
    </citation>
    <scope>NUCLEOTIDE SEQUENCE [MRNA] (ISOFORM 4)</scope>
    <scope>VARIANT THR-479</scope>
    <source>
        <tissue>Keratinocyte</tissue>
    </source>
</reference>
<reference key="6">
    <citation type="journal article" date="1992" name="Proc. Natl. Acad. Sci. U.S.A.">
        <title>Genomic structure of DNA encoding the lymphocyte homing receptor CD44 reveals at least 12 alternatively spliced exons.</title>
        <authorList>
            <person name="Screaton G.R."/>
            <person name="Bell M.V."/>
            <person name="Jackson D.G."/>
            <person name="Cornelis F.B."/>
            <person name="Gerth U."/>
            <person name="Bell J.I."/>
        </authorList>
    </citation>
    <scope>NUCLEOTIDE SEQUENCE [GENOMIC DNA]</scope>
    <scope>ALTERNATIVE SPLICING</scope>
    <scope>VARIANTS ARG-417 AND THR-479</scope>
    <source>
        <tissue>Lymphoblast</tissue>
    </source>
</reference>
<reference key="7">
    <citation type="journal article" date="1993" name="Curr. Top. Microbiol. Immunol.">
        <title>CD44: a multitude of isoforms with diverse functions.</title>
        <authorList>
            <person name="Gunthert U."/>
        </authorList>
    </citation>
    <scope>NUCLEOTIDE SEQUENCE [MRNA] (ISOFORM 1)</scope>
    <scope>VARIANTS ARG-417; THR-479 AND HIS-494</scope>
</reference>
<reference key="8">
    <citation type="journal article" date="1993" name="Mol. Carcinog.">
        <title>Novel variants of CD44 arising from alternative splicing: changes in the CD44 alternative splicing pattern of MCF-7 breast carcinoma cells treated with hyaluronidase.</title>
        <authorList>
            <person name="Tanabe K.K."/>
            <person name="Nishi T."/>
            <person name="Saya H."/>
        </authorList>
    </citation>
    <scope>NUCLEOTIDE SEQUENCE [MRNA] (ISOFORMS 2; 13 AND 14)</scope>
    <scope>VARIANT THR-479</scope>
    <source>
        <tissue>Mammary carcinoma</tissue>
    </source>
</reference>
<reference key="9">
    <citation type="journal article" date="1999" name="Neoplasia">
        <title>Identification and characterization of CD44RC, a novel alternatively spliced soluble CD44 isoform that can potentiate the hyaluronan binding activity of cell surface CD44.</title>
        <authorList>
            <person name="Chiu R.K."/>
            <person name="Carpenito C."/>
            <person name="Dougherty S.T."/>
            <person name="Hayes G.M."/>
            <person name="Dougherty G.J."/>
        </authorList>
    </citation>
    <scope>NUCLEOTIDE SEQUENCE [MRNA] (ISOFORM 19)</scope>
</reference>
<reference key="10">
    <citation type="submission" date="1995-12" db="EMBL/GenBank/DDBJ databases">
        <title>CD44 in normal and neoplastic human cartilage.</title>
        <authorList>
            <person name="Bosch P.P."/>
            <person name="Stevens J.W."/>
            <person name="Buckwalter J.A."/>
            <person name="Midura R.J."/>
        </authorList>
    </citation>
    <scope>NUCLEOTIDE SEQUENCE [MRNA] (ISOFORM 12)</scope>
    <source>
        <tissue>Articular cartilage</tissue>
    </source>
</reference>
<reference key="11">
    <citation type="submission" date="2002-04" db="EMBL/GenBank/DDBJ databases">
        <title>Sequence analysis of the human CD44 antigen.</title>
        <authorList>
            <person name="Wiebe G.J."/>
            <person name="Freund D."/>
            <person name="Corbeil D."/>
        </authorList>
    </citation>
    <scope>NUCLEOTIDE SEQUENCE [MRNA] (ISOFORMS 10 AND 12)</scope>
    <scope>VARIANT THR-479</scope>
    <source>
        <tissue>Colon adenocarcinoma</tissue>
        <tissue>Retinal pigment epithelium</tissue>
    </source>
</reference>
<reference key="12">
    <citation type="submission" date="2007-04" db="EMBL/GenBank/DDBJ databases">
        <title>Sequence analysis of a novel human CD44 variant.</title>
        <authorList>
            <person name="Xiang Q."/>
            <person name="Wang J."/>
            <person name="Fan C."/>
            <person name="He X."/>
            <person name="Huang L."/>
            <person name="Zhu H."/>
            <person name="Qiu X."/>
            <person name="Luo W."/>
        </authorList>
    </citation>
    <scope>NUCLEOTIDE SEQUENCE [MRNA] (ISOFORM 11)</scope>
</reference>
<reference key="13">
    <citation type="submission" date="2008-09" db="EMBL/GenBank/DDBJ databases">
        <title>Construction of human CD44 eukaryotic vector and its expression in mammary carcinoma cells MCF-7.</title>
        <authorList>
            <person name="Fang X."/>
            <person name="Xu W."/>
            <person name="Zhang X."/>
        </authorList>
    </citation>
    <scope>NUCLEOTIDE SEQUENCE [MRNA] (ISOFORM 18)</scope>
</reference>
<reference key="14">
    <citation type="journal article" date="2007" name="BMC Genomics">
        <title>The full-ORF clone resource of the German cDNA consortium.</title>
        <authorList>
            <person name="Bechtel S."/>
            <person name="Rosenfelder H."/>
            <person name="Duda A."/>
            <person name="Schmidt C.P."/>
            <person name="Ernst U."/>
            <person name="Wellenreuther R."/>
            <person name="Mehrle A."/>
            <person name="Schuster C."/>
            <person name="Bahr A."/>
            <person name="Bloecker H."/>
            <person name="Heubner D."/>
            <person name="Hoerlein A."/>
            <person name="Michel G."/>
            <person name="Wedler H."/>
            <person name="Koehrer K."/>
            <person name="Ottenwaelder B."/>
            <person name="Poustka A."/>
            <person name="Wiemann S."/>
            <person name="Schupp I."/>
        </authorList>
    </citation>
    <scope>NUCLEOTIDE SEQUENCE [LARGE SCALE MRNA] (ISOFORM 12)</scope>
    <source>
        <tissue>Spinal cord</tissue>
    </source>
</reference>
<reference key="15">
    <citation type="journal article" date="2006" name="Nature">
        <title>Human chromosome 11 DNA sequence and analysis including novel gene identification.</title>
        <authorList>
            <person name="Taylor T.D."/>
            <person name="Noguchi H."/>
            <person name="Totoki Y."/>
            <person name="Toyoda A."/>
            <person name="Kuroki Y."/>
            <person name="Dewar K."/>
            <person name="Lloyd C."/>
            <person name="Itoh T."/>
            <person name="Takeda T."/>
            <person name="Kim D.-W."/>
            <person name="She X."/>
            <person name="Barlow K.F."/>
            <person name="Bloom T."/>
            <person name="Bruford E."/>
            <person name="Chang J.L."/>
            <person name="Cuomo C.A."/>
            <person name="Eichler E."/>
            <person name="FitzGerald M.G."/>
            <person name="Jaffe D.B."/>
            <person name="LaButti K."/>
            <person name="Nicol R."/>
            <person name="Park H.-S."/>
            <person name="Seaman C."/>
            <person name="Sougnez C."/>
            <person name="Yang X."/>
            <person name="Zimmer A.R."/>
            <person name="Zody M.C."/>
            <person name="Birren B.W."/>
            <person name="Nusbaum C."/>
            <person name="Fujiyama A."/>
            <person name="Hattori M."/>
            <person name="Rogers J."/>
            <person name="Lander E.S."/>
            <person name="Sakaki Y."/>
        </authorList>
    </citation>
    <scope>NUCLEOTIDE SEQUENCE [LARGE SCALE GENOMIC DNA]</scope>
</reference>
<reference key="16">
    <citation type="submission" date="2005-09" db="EMBL/GenBank/DDBJ databases">
        <authorList>
            <person name="Mural R.J."/>
            <person name="Istrail S."/>
            <person name="Sutton G.G."/>
            <person name="Florea L."/>
            <person name="Halpern A.L."/>
            <person name="Mobarry C.M."/>
            <person name="Lippert R."/>
            <person name="Walenz B."/>
            <person name="Shatkay H."/>
            <person name="Dew I."/>
            <person name="Miller J.R."/>
            <person name="Flanigan M.J."/>
            <person name="Edwards N.J."/>
            <person name="Bolanos R."/>
            <person name="Fasulo D."/>
            <person name="Halldorsson B.V."/>
            <person name="Hannenhalli S."/>
            <person name="Turner R."/>
            <person name="Yooseph S."/>
            <person name="Lu F."/>
            <person name="Nusskern D.R."/>
            <person name="Shue B.C."/>
            <person name="Zheng X.H."/>
            <person name="Zhong F."/>
            <person name="Delcher A.L."/>
            <person name="Huson D.H."/>
            <person name="Kravitz S.A."/>
            <person name="Mouchard L."/>
            <person name="Reinert K."/>
            <person name="Remington K.A."/>
            <person name="Clark A.G."/>
            <person name="Waterman M.S."/>
            <person name="Eichler E.E."/>
            <person name="Adams M.D."/>
            <person name="Hunkapiller M.W."/>
            <person name="Myers E.W."/>
            <person name="Venter J.C."/>
        </authorList>
    </citation>
    <scope>NUCLEOTIDE SEQUENCE [LARGE SCALE GENOMIC DNA]</scope>
</reference>
<reference key="17">
    <citation type="journal article" date="2004" name="Genome Res.">
        <title>The status, quality, and expansion of the NIH full-length cDNA project: the Mammalian Gene Collection (MGC).</title>
        <authorList>
            <consortium name="The MGC Project Team"/>
        </authorList>
    </citation>
    <scope>NUCLEOTIDE SEQUENCE [LARGE SCALE MRNA] (ISOFORMS 4 AND 12)</scope>
    <scope>VARIANTS ARG-417 AND THR-479</scope>
    <source>
        <tissue>Pancreas</tissue>
        <tissue>Retinal pigment epithelium</tissue>
    </source>
</reference>
<reference key="18">
    <citation type="journal article" date="1991" name="Mol. Cell. Biol.">
        <title>Expression of CD44 is repressed in neuroblastoma cells.</title>
        <authorList>
            <person name="Shtivelman E."/>
            <person name="Bishop J.M."/>
        </authorList>
    </citation>
    <scope>NUCLEOTIDE SEQUENCE [MRNA] OF 1-22</scope>
    <source>
        <tissue>Lymphoblast</tissue>
    </source>
</reference>
<reference key="19">
    <citation type="journal article" date="1989" name="Cell">
        <title>A human lymphocyte homing receptor, the hermes antigen, is related to cartilage proteoglycan core and link proteins.</title>
        <authorList>
            <person name="Goldstein L.A."/>
            <person name="Zhou D.F.H."/>
            <person name="Picker L.J."/>
            <person name="Minty C.N."/>
            <person name="Bargatze R.F."/>
            <person name="Ding J.F."/>
            <person name="Butcher E.C."/>
        </authorList>
    </citation>
    <scope>NUCLEOTIDE SEQUENCE [MRNA] OF 2-742 (ISOFORM 15)</scope>
</reference>
<reference key="20">
    <citation type="journal article" date="1994" name="Cancer Immunol. Immunother.">
        <title>Anti-(glioma surface antigen) monoclonal antibody G-22 recognizes overexpressed CD44 in glioma cells.</title>
        <authorList>
            <person name="Okada H."/>
            <person name="Yoshida J."/>
            <person name="Seo H."/>
            <person name="Wakabayashi T."/>
            <person name="Sugita K."/>
            <person name="Hagiwara M."/>
        </authorList>
    </citation>
    <scope>PROTEIN SEQUENCE OF 55-108</scope>
    <source>
        <tissue>Glial tumor</tissue>
    </source>
</reference>
<reference key="21">
    <citation type="journal article" date="1994" name="J. Virol.">
        <title>A monoclonal antibody that blocks poliovirus attachment recognizes the lymphocyte homing receptor CD44.</title>
        <authorList>
            <person name="Shepley M.P."/>
            <person name="Racaniello V.R."/>
        </authorList>
    </citation>
    <scope>PROTEIN SEQUENCE OF 67-89</scope>
    <source>
        <tissue>Peripheral blood</tissue>
    </source>
</reference>
<reference key="22">
    <citation type="journal article" date="1991" name="J. Cell Biol.">
        <title>Human keratinocytes express a new CD44 core protein (CD44E) as a heparan-sulfate intrinsic membrane proteoglycan with additional exons.</title>
        <authorList>
            <person name="Brown T.A."/>
            <person name="Bouchard T."/>
            <person name="St John T."/>
            <person name="Wayner E."/>
            <person name="Carter W.G."/>
        </authorList>
    </citation>
    <scope>NUCLEOTIDE SEQUENCE [MRNA] OF 184-625 (ISOFORM 10)</scope>
    <scope>VARIANT THR-479</scope>
    <source>
        <tissue>Foreskin</tissue>
    </source>
</reference>
<reference key="23">
    <citation type="journal article" date="1994" name="BMJ">
        <title>Non-invasive detection of malignancy by identification of unusual CD44 gene activity in exfoliated cancer cells.</title>
        <authorList>
            <person name="Matsumura Y."/>
            <person name="Hanbury D."/>
            <person name="Smith J."/>
            <person name="Tarin D."/>
        </authorList>
    </citation>
    <scope>NUCLEOTIDE SEQUENCE [GENOMIC DNA] OF 221-267</scope>
</reference>
<reference key="24">
    <citation type="journal article" date="1991" name="Cancer Res.">
        <title>CD44 splice variants confer metastatic behavior in rats: homologous sequences are expressed in human tumor cell lines.</title>
        <authorList>
            <person name="Hofmann M."/>
            <person name="Rudy W."/>
            <person name="Zoeller M."/>
            <person name="Toelg C."/>
            <person name="Ponta H."/>
            <person name="Herrlich P."/>
            <person name="Guenthert U."/>
        </authorList>
    </citation>
    <scope>NUCLEOTIDE SEQUENCE [MRNA] OF 267-603 (ISOFORM 1)</scope>
    <scope>VARIANT ARG-417</scope>
    <source>
        <tissue>Lung</tissue>
    </source>
</reference>
<reference key="25">
    <citation type="journal article" date="1994" name="Hum. Immunol.">
        <title>Stimulation of T cells via CD44 requires leukocyte-function-associated antigen interactions and interleukin-2 production.</title>
        <authorList>
            <person name="Funaro A."/>
            <person name="Spagnoli G.C."/>
            <person name="Momo M."/>
            <person name="Knapp W."/>
            <person name="Malavasi F."/>
        </authorList>
    </citation>
    <scope>FUNCTION</scope>
</reference>
<reference key="26">
    <citation type="journal article" date="2003" name="Nat. Rev. Mol. Cell Biol.">
        <title>CD44: from adhesion molecules to signalling regulators.</title>
        <authorList>
            <person name="Ponta H."/>
            <person name="Sherman L."/>
            <person name="Herrlich P.A."/>
        </authorList>
    </citation>
    <scope>REVIEW ON FUNCTION</scope>
    <scope>POST-TRANSLATIONAL MODIFICATIONS</scope>
</reference>
<reference key="27">
    <citation type="journal article" date="1998" name="J. Cell Sci.">
        <title>Hyaluronan-dependent cell migration can be blocked by a CD44 cytoplasmic domain peptide containing a phosphoserine at position 325.</title>
        <authorList>
            <person name="Peck D."/>
            <person name="Isacke C.M."/>
        </authorList>
    </citation>
    <scope>PHOSPHORYLATION AT SER-706</scope>
</reference>
<reference key="28">
    <citation type="journal article" date="2002" name="Nat. Cell Biol.">
        <title>A novel PKC-regulated mechanism controls CD44 ezrin association and directional cell motility.</title>
        <authorList>
            <person name="Legg J.W."/>
            <person name="Lewis C.A."/>
            <person name="Parsons M."/>
            <person name="Ng T."/>
            <person name="Isacke C.M."/>
        </authorList>
    </citation>
    <scope>PHOSPHORYLATION AT SER-672</scope>
</reference>
<reference key="29">
    <citation type="journal article" date="2003" name="Melanoma Res.">
        <title>CD44s adhesive function spontaneous and PMA-inducible CD44 cleavage are regulated at post-translational level in cells of melanocytic lineage.</title>
        <authorList>
            <person name="Bartolazzi A."/>
        </authorList>
    </citation>
    <scope>GLYCOSYLATION</scope>
    <scope>PROTEOLYTIC PROCESSING</scope>
</reference>
<reference key="30">
    <citation type="journal article" date="2004" name="J. Biol. Chem.">
        <title>Hyaluronan-CD44 interaction with Rac1-dependent protein kinase N-gamma promotes phospholipase Cgamma1 activation, Ca(2+) signaling, and cortactin-cytoskeleton function leading to keratinocyte adhesion and differentiation.</title>
        <authorList>
            <person name="Bourguignon L.Y."/>
            <person name="Singleton P.A."/>
            <person name="Diedrich F."/>
        </authorList>
    </citation>
    <scope>FUNCTION</scope>
    <scope>INTERACTION WITH PKN2</scope>
</reference>
<reference key="31">
    <citation type="journal article" date="2005" name="J. Proteome Res.">
        <title>Human plasma N-glycoproteome analysis by immunoaffinity subtraction, hydrazide chemistry, and mass spectrometry.</title>
        <authorList>
            <person name="Liu T."/>
            <person name="Qian W.-J."/>
            <person name="Gritsenko M.A."/>
            <person name="Camp D.G. II"/>
            <person name="Monroe M.E."/>
            <person name="Moore R.J."/>
            <person name="Smith R.D."/>
        </authorList>
    </citation>
    <scope>GLYCOSYLATION [LARGE SCALE ANALYSIS] AT ASN-57</scope>
    <source>
        <tissue>Plasma</tissue>
    </source>
</reference>
<reference key="32">
    <citation type="journal article" date="2006" name="Cell">
        <title>Global, in vivo, and site-specific phosphorylation dynamics in signaling networks.</title>
        <authorList>
            <person name="Olsen J.V."/>
            <person name="Blagoev B."/>
            <person name="Gnad F."/>
            <person name="Macek B."/>
            <person name="Kumar C."/>
            <person name="Mortensen P."/>
            <person name="Mann M."/>
        </authorList>
    </citation>
    <scope>PHOSPHORYLATION [LARGE SCALE ANALYSIS] AT SER-686 AND SER-706</scope>
    <scope>IDENTIFICATION BY MASS SPECTROMETRY [LARGE SCALE ANALYSIS]</scope>
    <source>
        <tissue>Cervix carcinoma</tissue>
    </source>
</reference>
<reference key="33">
    <citation type="journal article" date="2006" name="EMBO J.">
        <title>RNA-binding IMPs promote cell adhesion and invadopodia formation.</title>
        <authorList>
            <person name="Vikesaa J."/>
            <person name="Hansen T.V."/>
            <person name="Joenson L."/>
            <person name="Borup R."/>
            <person name="Wewer U.M."/>
            <person name="Christiansen J."/>
            <person name="Nielsen F.C."/>
        </authorList>
    </citation>
    <scope>FUNCTION</scope>
</reference>
<reference key="34">
    <citation type="journal article" date="2008" name="J. Proteome Res.">
        <title>Phosphorylation analysis of primary human T lymphocytes using sequential IMAC and titanium oxide enrichment.</title>
        <authorList>
            <person name="Carrascal M."/>
            <person name="Ovelleiro D."/>
            <person name="Casas V."/>
            <person name="Gay M."/>
            <person name="Abian J."/>
        </authorList>
    </citation>
    <scope>PHOSPHORYLATION [LARGE SCALE ANALYSIS] AT SER-706</scope>
    <scope>IDENTIFICATION BY MASS SPECTROMETRY [LARGE SCALE ANALYSIS]</scope>
    <source>
        <tissue>T-cell</tissue>
    </source>
</reference>
<reference key="35">
    <citation type="journal article" date="2008" name="Mol. Cell">
        <title>Kinase-selective enrichment enables quantitative phosphoproteomics of the kinome across the cell cycle.</title>
        <authorList>
            <person name="Daub H."/>
            <person name="Olsen J.V."/>
            <person name="Bairlein M."/>
            <person name="Gnad F."/>
            <person name="Oppermann F.S."/>
            <person name="Korner R."/>
            <person name="Greff Z."/>
            <person name="Keri G."/>
            <person name="Stemmann O."/>
            <person name="Mann M."/>
        </authorList>
    </citation>
    <scope>PHOSPHORYLATION [LARGE SCALE ANALYSIS] AT SER-706</scope>
    <scope>IDENTIFICATION BY MASS SPECTROMETRY [LARGE SCALE ANALYSIS]</scope>
    <source>
        <tissue>Cervix carcinoma</tissue>
    </source>
</reference>
<reference key="36">
    <citation type="journal article" date="2008" name="Proc. Natl. Acad. Sci. U.S.A.">
        <title>A quantitative atlas of mitotic phosphorylation.</title>
        <authorList>
            <person name="Dephoure N."/>
            <person name="Zhou C."/>
            <person name="Villen J."/>
            <person name="Beausoleil S.A."/>
            <person name="Bakalarski C.E."/>
            <person name="Elledge S.J."/>
            <person name="Gygi S.P."/>
        </authorList>
    </citation>
    <scope>IDENTIFICATION BY MASS SPECTROMETRY [LARGE SCALE ANALYSIS]</scope>
    <source>
        <tissue>Cervix carcinoma</tissue>
    </source>
</reference>
<reference key="37">
    <citation type="journal article" date="2009" name="J. Proteome Res.">
        <title>Glycoproteomics analysis of human liver tissue by combination of multiple enzyme digestion and hydrazide chemistry.</title>
        <authorList>
            <person name="Chen R."/>
            <person name="Jiang X."/>
            <person name="Sun D."/>
            <person name="Han G."/>
            <person name="Wang F."/>
            <person name="Ye M."/>
            <person name="Wang L."/>
            <person name="Zou H."/>
        </authorList>
    </citation>
    <scope>GLYCOSYLATION [LARGE SCALE ANALYSIS] AT ASN-57 AND ASN-110</scope>
    <source>
        <tissue>Liver</tissue>
    </source>
</reference>
<reference key="38">
    <citation type="journal article" date="2009" name="PLoS ONE">
        <title>Unc119 protects from Shigella infection by inhibiting the Abl family kinases.</title>
        <authorList>
            <person name="Vepachedu R."/>
            <person name="Karim Z."/>
            <person name="Patel O."/>
            <person name="Goplen N."/>
            <person name="Alam R."/>
        </authorList>
    </citation>
    <scope>INTERACTION WITH UNC119</scope>
</reference>
<reference key="39">
    <citation type="journal article" date="2009" name="Sci. Signal.">
        <title>Quantitative phosphoproteomic analysis of T cell receptor signaling reveals system-wide modulation of protein-protein interactions.</title>
        <authorList>
            <person name="Mayya V."/>
            <person name="Lundgren D.H."/>
            <person name="Hwang S.-I."/>
            <person name="Rezaul K."/>
            <person name="Wu L."/>
            <person name="Eng J.K."/>
            <person name="Rodionov V."/>
            <person name="Han D.K."/>
        </authorList>
    </citation>
    <scope>IDENTIFICATION BY MASS SPECTROMETRY [LARGE SCALE ANALYSIS]</scope>
    <source>
        <tissue>Leukemic T-cell</tissue>
    </source>
</reference>
<reference key="40">
    <citation type="journal article" date="2009" name="J. Hepatol.">
        <title>Adhesion of human haematopoietic (CD34+) stem cells to human liver compartments is integrin and CD44 dependent and modulated by CXCR3 and CXCR4.</title>
        <authorList>
            <person name="Crosby H.A."/>
            <person name="Lalor P.F."/>
            <person name="Ross E."/>
            <person name="Newsome P.N."/>
            <person name="Adams D.H."/>
        </authorList>
    </citation>
    <scope>FUNCTION</scope>
</reference>
<reference key="41">
    <citation type="journal article" date="2009" name="Am. J. Respir. Cell Mol. Biol.">
        <title>Hyaluronan fragments/CD44 mediate oxidative stress-induced MUC5B up-regulation in airway epithelium.</title>
        <authorList>
            <person name="Casalino-Matsuda S.M."/>
            <person name="Monzon M.E."/>
            <person name="Day A.J."/>
            <person name="Forteza R.M."/>
        </authorList>
    </citation>
    <scope>FUNCTION</scope>
    <scope>INTERACTION WITH EGFR</scope>
</reference>
<reference key="42">
    <citation type="journal article" date="2010" name="Mol. Biol. Cell">
        <title>Podoplanin associates with CD44 to promote directional cell migration.</title>
        <authorList>
            <person name="Martin-Villar E."/>
            <person name="Fernandez-Munoz B."/>
            <person name="Parsons M."/>
            <person name="Yurrita M.M."/>
            <person name="Megias D."/>
            <person name="Perez-Gomez E."/>
            <person name="Jones G.E."/>
            <person name="Quintanilla M."/>
        </authorList>
    </citation>
    <scope>INTERACTION WITH PDPN</scope>
</reference>
<reference key="43">
    <citation type="journal article" date="2010" name="Sci. Signal.">
        <title>Quantitative phosphoproteomics reveals widespread full phosphorylation site occupancy during mitosis.</title>
        <authorList>
            <person name="Olsen J.V."/>
            <person name="Vermeulen M."/>
            <person name="Santamaria A."/>
            <person name="Kumar C."/>
            <person name="Miller M.L."/>
            <person name="Jensen L.J."/>
            <person name="Gnad F."/>
            <person name="Cox J."/>
            <person name="Jensen T.S."/>
            <person name="Nigg E.A."/>
            <person name="Brunak S."/>
            <person name="Mann M."/>
        </authorList>
    </citation>
    <scope>PHOSPHORYLATION [LARGE SCALE ANALYSIS] AT SER-686 AND SER-706</scope>
    <scope>IDENTIFICATION BY MASS SPECTROMETRY [LARGE SCALE ANALYSIS]</scope>
    <source>
        <tissue>Cervix carcinoma</tissue>
    </source>
</reference>
<reference key="44">
    <citation type="journal article" date="2011" name="BMC Syst. Biol.">
        <title>Initial characterization of the human central proteome.</title>
        <authorList>
            <person name="Burkard T.R."/>
            <person name="Planyavsky M."/>
            <person name="Kaupe I."/>
            <person name="Breitwieser F.P."/>
            <person name="Buerckstuemmer T."/>
            <person name="Bennett K.L."/>
            <person name="Superti-Furga G."/>
            <person name="Colinge J."/>
        </authorList>
    </citation>
    <scope>IDENTIFICATION BY MASS SPECTROMETRY [LARGE SCALE ANALYSIS]</scope>
</reference>
<reference key="45">
    <citation type="journal article" date="2011" name="Sci. Signal.">
        <title>System-wide temporal characterization of the proteome and phosphoproteome of human embryonic stem cell differentiation.</title>
        <authorList>
            <person name="Rigbolt K.T."/>
            <person name="Prokhorova T.A."/>
            <person name="Akimov V."/>
            <person name="Henningsen J."/>
            <person name="Johansen P.T."/>
            <person name="Kratchmarova I."/>
            <person name="Kassem M."/>
            <person name="Mann M."/>
            <person name="Olsen J.V."/>
            <person name="Blagoev B."/>
        </authorList>
    </citation>
    <scope>PHOSPHORYLATION [LARGE SCALE ANALYSIS] AT SER-706</scope>
    <scope>IDENTIFICATION BY MASS SPECTROMETRY [LARGE SCALE ANALYSIS]</scope>
</reference>
<reference key="46">
    <citation type="journal article" date="2012" name="Mol. Cell. Proteomics">
        <title>Human urinary glycoproteomics; attachment site specific analysis of N- and O-linked glycosylations by CID and ECD.</title>
        <authorList>
            <person name="Halim A."/>
            <person name="Nilsson J."/>
            <person name="Ruetschi U."/>
            <person name="Hesse C."/>
            <person name="Larson G."/>
        </authorList>
    </citation>
    <scope>GLYCOSYLATION</scope>
    <scope>STRUCTURE OF CARBOHYDRATES</scope>
    <scope>IDENTIFICATION BY MASS SPECTROMETRY</scope>
</reference>
<reference key="47">
    <citation type="journal article" date="2012" name="Pathol. Int.">
        <title>CD44 in human glioma correlates with histopathological grade and cell migration.</title>
        <authorList>
            <person name="Yoshida T."/>
            <person name="Matsuda Y."/>
            <person name="Naito Z."/>
            <person name="Ishiwata T."/>
        </authorList>
    </citation>
    <scope>FUNCTION</scope>
    <scope>SUBCELLULAR LOCATION</scope>
</reference>
<reference key="48">
    <citation type="journal article" date="2013" name="J. Biol. Chem.">
        <title>Transforming growth factor-beta1 (TGF-beta1)-stimulated fibroblast to myofibroblast differentiation is mediated by hyaluronan (HA)-facilitated epidermal growth factor receptor (EGFR) and CD44 co-localization in lipid rafts.</title>
        <authorList>
            <person name="Midgley A.C."/>
            <person name="Rogers M."/>
            <person name="Hallett M.B."/>
            <person name="Clayton A."/>
            <person name="Bowen T."/>
            <person name="Phillips A.O."/>
            <person name="Steadman R."/>
        </authorList>
    </citation>
    <scope>FUNCTION</scope>
    <scope>SUBCELLULAR LOCATION</scope>
    <scope>INTERACTION WITH EGFR</scope>
</reference>
<reference key="49">
    <citation type="journal article" date="2013" name="J. Proteome Res.">
        <title>Toward a comprehensive characterization of a human cancer cell phosphoproteome.</title>
        <authorList>
            <person name="Zhou H."/>
            <person name="Di Palma S."/>
            <person name="Preisinger C."/>
            <person name="Peng M."/>
            <person name="Polat A.N."/>
            <person name="Heck A.J."/>
            <person name="Mohammed S."/>
        </authorList>
    </citation>
    <scope>PHOSPHORYLATION [LARGE SCALE ANALYSIS] AT SER-686 AND SER-706</scope>
    <scope>IDENTIFICATION BY MASS SPECTROMETRY [LARGE SCALE ANALYSIS]</scope>
    <source>
        <tissue>Cervix carcinoma</tissue>
    </source>
</reference>
<reference key="50">
    <citation type="journal article" date="2014" name="J. Proteomics">
        <title>An enzyme assisted RP-RPLC approach for in-depth analysis of human liver phosphoproteome.</title>
        <authorList>
            <person name="Bian Y."/>
            <person name="Song C."/>
            <person name="Cheng K."/>
            <person name="Dong M."/>
            <person name="Wang F."/>
            <person name="Huang J."/>
            <person name="Sun D."/>
            <person name="Wang L."/>
            <person name="Ye M."/>
            <person name="Zou H."/>
        </authorList>
    </citation>
    <scope>IDENTIFICATION BY MASS SPECTROMETRY [LARGE SCALE ANALYSIS]</scope>
    <source>
        <tissue>Liver</tissue>
    </source>
</reference>
<reference key="51">
    <citation type="journal article" date="2015" name="Mol. Cell. Proteomics">
        <title>Identification of chondroitin sulfate linkage region glycopeptides reveals prohormones as a novel class of proteoglycans.</title>
        <authorList>
            <person name="Noborn F."/>
            <person name="Gomez Toledo A."/>
            <person name="Sihlbom C."/>
            <person name="Lengqvist J."/>
            <person name="Fries E."/>
            <person name="Kjellen L."/>
            <person name="Nilsson J."/>
            <person name="Larson G."/>
        </authorList>
    </citation>
    <scope>SUBCELLULAR LOCATION</scope>
    <scope>TISSUE SPECIFICITY</scope>
    <scope>GLYCOSYLATION AT SER-180</scope>
</reference>
<reference key="52">
    <citation type="journal article" date="2015" name="Proteomics">
        <title>N-terminome analysis of the human mitochondrial proteome.</title>
        <authorList>
            <person name="Vaca Jacome A.S."/>
            <person name="Rabilloud T."/>
            <person name="Schaeffer-Reiss C."/>
            <person name="Rompais M."/>
            <person name="Ayoub D."/>
            <person name="Lane L."/>
            <person name="Bairoch A."/>
            <person name="Van Dorsselaer A."/>
            <person name="Carapito C."/>
        </authorList>
    </citation>
    <scope>IDENTIFICATION BY MASS SPECTROMETRY [LARGE SCALE ANALYSIS]</scope>
</reference>
<reference key="53">
    <citation type="journal article" date="2018" name="Acta Biomater.">
        <title>Extracellular matrix component expression in human pluripotent stem cell-derived retinal organoids recapitulates retinogenesis in vivo and reveals an important role for IMPG1 and CD44 in the development of photoreceptors and interphotoreceptor matrix.</title>
        <authorList>
            <person name="Felemban M."/>
            <person name="Dorgau B."/>
            <person name="Hunt N.C."/>
            <person name="Hallam D."/>
            <person name="Zerti D."/>
            <person name="Bauer R."/>
            <person name="Ding Y."/>
            <person name="Collin J."/>
            <person name="Steel D."/>
            <person name="Krasnogor N."/>
            <person name="Al-Aama J."/>
            <person name="Lindsay S."/>
            <person name="Mellough C."/>
            <person name="Lako M."/>
        </authorList>
    </citation>
    <scope>DEVELOPMENTAL STAGE</scope>
</reference>
<reference key="54">
    <citation type="journal article" date="2020" name="Glycobiology">
        <title>An affinity chromatography and glycoproteomics workflow to profile the chondroitin sulfate proteoglycans that interact with malarial VAR2CSA in the placenta and in cancer.</title>
        <authorList>
            <person name="Toledo A.G."/>
            <person name="Pihl J."/>
            <person name="Spliid C.B."/>
            <person name="Persson A."/>
            <person name="Nilsson J."/>
            <person name="Pereira M.A."/>
            <person name="Gustavsson T."/>
            <person name="Choudhary S."/>
            <person name="Oo H.Z."/>
            <person name="Black P.C."/>
            <person name="Daugaard M."/>
            <person name="Esko J.D."/>
            <person name="Larson G."/>
            <person name="Salanti A."/>
            <person name="Clausen T.M."/>
        </authorList>
    </citation>
    <scope>TISSUE SPECIFICITY</scope>
    <scope>GLYCOSYLATION AT SER-180</scope>
</reference>
<reference key="55">
    <citation type="journal article" date="2022" name="J. Proteins Proteom.">
        <title>Mass spectrometric analysis of chondroitin sulfate-linked peptides.</title>
        <authorList>
            <person name="Ramarajan M.G."/>
            <person name="Saraswat M."/>
            <person name="Budhraja R."/>
            <person name="Garapati K."/>
            <person name="Raymond K."/>
            <person name="Pandey A."/>
        </authorList>
    </citation>
    <scope>SUBCELLULAR LOCATION</scope>
    <scope>TISSUE SPECIFICITY</scope>
    <scope>GLYCOSYLATION AT SER-180</scope>
</reference>
<reference key="56">
    <citation type="journal article" date="2023" name="Mol. Cell. Proteomics">
        <title>Mapping the Human Chondroitin Sulfate Glycoproteome Reveals an Unexpected Correlation Between Glycan Sulfation and Attachment Site Characteristics.</title>
        <authorList>
            <person name="Noborn F."/>
            <person name="Nilsson J."/>
            <person name="Sihlbom C."/>
            <person name="Nikpour M."/>
            <person name="Kjellen L."/>
            <person name="Larson G."/>
        </authorList>
    </citation>
    <scope>SUBCELLULAR LOCATION</scope>
    <scope>TISSUE SPECIFICITY</scope>
    <scope>GLYCOSYLATION AT SER-180</scope>
</reference>
<reference key="57">
    <citation type="journal article" date="2004" name="Mol. Cell">
        <title>Structure of the regulatory hyaluronan binding domain in the inflammatory leukocyte homing receptor CD44.</title>
        <authorList>
            <person name="Teriete P."/>
            <person name="Banerji S."/>
            <person name="Noble M."/>
            <person name="Blundell C.D."/>
            <person name="Wright A.J."/>
            <person name="Pickford A.R."/>
            <person name="Lowe E."/>
            <person name="Mahoney D.J."/>
            <person name="Tammi M.I."/>
            <person name="Kahmann J.D."/>
            <person name="Campbell I.D."/>
            <person name="Day A.J."/>
            <person name="Jackson D.G."/>
        </authorList>
    </citation>
    <scope>X-RAY CRYSTALLOGRAPHY (2.2 ANGSTROMS) OF 20-178</scope>
    <scope>STRUCTURE BY NMR OF 20-178</scope>
    <scope>INTERACTION WITH HA</scope>
</reference>
<reference key="58">
    <citation type="journal article" date="2006" name="J. Biol. Chem.">
        <title>Ligand-induced structural changes of the CD44 hyaluronan-binding domain revealed by NMR.</title>
        <authorList>
            <person name="Takeda M."/>
            <person name="Ogino S."/>
            <person name="Umemoto R."/>
            <person name="Sakakura M."/>
            <person name="Kajiwara M."/>
            <person name="Sugahara K.N."/>
            <person name="Hayasaka H."/>
            <person name="Miyasaka M."/>
            <person name="Terasawa H."/>
            <person name="Shimada I."/>
        </authorList>
    </citation>
    <scope>STRUCTURE BY NMR OF 20-178 IN COMPLEX WITH HA</scope>
</reference>
<reference key="59">
    <citation type="journal article" date="2014" name="Acta Crystallogr. F Struct. Biol. Commun.">
        <title>High-resolution crystal structures of alternate forms of the human CD44 hyaluronan-binding domain reveal a site for protein interaction.</title>
        <authorList>
            <person name="Liu L.K."/>
            <person name="Finzel B."/>
        </authorList>
    </citation>
    <scope>X-RAY CRYSTALLOGRAPHY (1.08 ANGSTROMS) OF 18-171</scope>
    <scope>INTERACTION WITH HA</scope>
    <scope>DISULFIDE BOND</scope>
</reference>
<reference key="60">
    <citation type="journal article" date="1996" name="J. Biol. Chem.">
        <title>A blood group-related polymorphism of CD44 abolishes a hyaluronan-binding consensus sequence without preventing hyaluronan binding.</title>
        <authorList>
            <person name="Telen M.J."/>
            <person name="Udani M."/>
            <person name="Washington M.K."/>
            <person name="Levesque M.C."/>
            <person name="Lloyd E."/>
            <person name="Rao N."/>
        </authorList>
    </citation>
    <scope>VARIANT BLOOD GROUP INDIAN PRO-46</scope>
</reference>
<keyword id="KW-0002">3D-structure</keyword>
<keyword id="KW-0025">Alternative splicing</keyword>
<keyword id="KW-0095">Blood group antigen</keyword>
<keyword id="KW-0130">Cell adhesion</keyword>
<keyword id="KW-1003">Cell membrane</keyword>
<keyword id="KW-0966">Cell projection</keyword>
<keyword id="KW-0903">Direct protein sequencing</keyword>
<keyword id="KW-1015">Disulfide bond</keyword>
<keyword id="KW-0325">Glycoprotein</keyword>
<keyword id="KW-0472">Membrane</keyword>
<keyword id="KW-0597">Phosphoprotein</keyword>
<keyword id="KW-0654">Proteoglycan</keyword>
<keyword id="KW-1267">Proteomics identification</keyword>
<keyword id="KW-0675">Receptor</keyword>
<keyword id="KW-1185">Reference proteome</keyword>
<keyword id="KW-0964">Secreted</keyword>
<keyword id="KW-0732">Signal</keyword>
<keyword id="KW-0812">Transmembrane</keyword>
<keyword id="KW-1133">Transmembrane helix</keyword>